<name>PSA6_HUMAN</name>
<feature type="chain" id="PRO_0000124130" description="Proteasome subunit alpha type-6">
    <location>
        <begin position="1"/>
        <end position="246"/>
    </location>
</feature>
<feature type="modified residue" description="Phosphoserine" evidence="20">
    <location>
        <position position="17"/>
    </location>
</feature>
<feature type="modified residue" description="Phosphoserine" evidence="20">
    <location>
        <position position="63"/>
    </location>
</feature>
<feature type="modified residue" description="Phosphoserine" evidence="20">
    <location>
        <position position="64"/>
    </location>
</feature>
<feature type="modified residue" description="N6-acetyllysine" evidence="19">
    <location>
        <position position="102"/>
    </location>
</feature>
<feature type="modified residue" description="N6-acetyllysine" evidence="19">
    <location>
        <position position="104"/>
    </location>
</feature>
<feature type="modified residue" description="Phosphotyrosine" evidence="2">
    <location>
        <position position="159"/>
    </location>
</feature>
<feature type="glycosylation site" description="O-linked (GlcNAc) serine" evidence="1">
    <location>
        <position position="5"/>
    </location>
</feature>
<feature type="splice variant" id="VSP_054586" description="In isoform 3." evidence="15">
    <location>
        <begin position="1"/>
        <end position="79"/>
    </location>
</feature>
<feature type="splice variant" id="VSP_054587" description="In isoform 2." evidence="15">
    <original>MSRGSSAGFDRHITIFSPEGRLYQV</original>
    <variation>MAGLRR</variation>
    <location>
        <begin position="1"/>
        <end position="25"/>
    </location>
</feature>
<feature type="sequence conflict" description="In Ref. 8; CAA43964." evidence="17" ref="8">
    <original>K</original>
    <variation>C</variation>
    <location>
        <position position="59"/>
    </location>
</feature>
<feature type="turn" evidence="23">
    <location>
        <begin position="8"/>
        <end position="12"/>
    </location>
</feature>
<feature type="strand" evidence="27">
    <location>
        <begin position="13"/>
        <end position="15"/>
    </location>
</feature>
<feature type="strand" evidence="25">
    <location>
        <begin position="18"/>
        <end position="20"/>
    </location>
</feature>
<feature type="helix" evidence="23">
    <location>
        <begin position="23"/>
        <end position="34"/>
    </location>
</feature>
<feature type="strand" evidence="23">
    <location>
        <begin position="38"/>
        <end position="42"/>
    </location>
</feature>
<feature type="strand" evidence="23">
    <location>
        <begin position="49"/>
        <end position="53"/>
    </location>
</feature>
<feature type="strand" evidence="24">
    <location>
        <begin position="59"/>
        <end position="61"/>
    </location>
</feature>
<feature type="helix" evidence="23">
    <location>
        <begin position="63"/>
        <end position="65"/>
    </location>
</feature>
<feature type="strand" evidence="23">
    <location>
        <begin position="68"/>
        <end position="73"/>
    </location>
</feature>
<feature type="strand" evidence="23">
    <location>
        <begin position="76"/>
        <end position="82"/>
    </location>
</feature>
<feature type="helix" evidence="23">
    <location>
        <begin position="84"/>
        <end position="105"/>
    </location>
</feature>
<feature type="helix" evidence="23">
    <location>
        <begin position="111"/>
        <end position="125"/>
    </location>
</feature>
<feature type="strand" evidence="21">
    <location>
        <begin position="128"/>
        <end position="131"/>
    </location>
</feature>
<feature type="strand" evidence="23">
    <location>
        <begin position="135"/>
        <end position="144"/>
    </location>
</feature>
<feature type="turn" evidence="23">
    <location>
        <begin position="145"/>
        <end position="147"/>
    </location>
</feature>
<feature type="strand" evidence="23">
    <location>
        <begin position="148"/>
        <end position="154"/>
    </location>
</feature>
<feature type="strand" evidence="21">
    <location>
        <begin position="156"/>
        <end position="158"/>
    </location>
</feature>
<feature type="strand" evidence="22">
    <location>
        <begin position="160"/>
        <end position="162"/>
    </location>
</feature>
<feature type="strand" evidence="23">
    <location>
        <begin position="163"/>
        <end position="169"/>
    </location>
</feature>
<feature type="helix" evidence="23">
    <location>
        <begin position="172"/>
        <end position="185"/>
    </location>
</feature>
<feature type="helix" evidence="23">
    <location>
        <begin position="187"/>
        <end position="189"/>
    </location>
</feature>
<feature type="strand" evidence="23">
    <location>
        <begin position="191"/>
        <end position="193"/>
    </location>
</feature>
<feature type="helix" evidence="23">
    <location>
        <begin position="194"/>
        <end position="206"/>
    </location>
</feature>
<feature type="helix" evidence="23">
    <location>
        <begin position="212"/>
        <end position="214"/>
    </location>
</feature>
<feature type="strand" evidence="23">
    <location>
        <begin position="215"/>
        <end position="219"/>
    </location>
</feature>
<feature type="strand" evidence="26">
    <location>
        <begin position="228"/>
        <end position="230"/>
    </location>
</feature>
<feature type="helix" evidence="23">
    <location>
        <begin position="232"/>
        <end position="243"/>
    </location>
</feature>
<organism>
    <name type="scientific">Homo sapiens</name>
    <name type="common">Human</name>
    <dbReference type="NCBI Taxonomy" id="9606"/>
    <lineage>
        <taxon>Eukaryota</taxon>
        <taxon>Metazoa</taxon>
        <taxon>Chordata</taxon>
        <taxon>Craniata</taxon>
        <taxon>Vertebrata</taxon>
        <taxon>Euteleostomi</taxon>
        <taxon>Mammalia</taxon>
        <taxon>Eutheria</taxon>
        <taxon>Euarchontoglires</taxon>
        <taxon>Primates</taxon>
        <taxon>Haplorrhini</taxon>
        <taxon>Catarrhini</taxon>
        <taxon>Hominidae</taxon>
        <taxon>Homo</taxon>
    </lineage>
</organism>
<evidence type="ECO:0000250" key="1"/>
<evidence type="ECO:0000250" key="2">
    <source>
        <dbReference type="UniProtKB" id="Q9QUM9"/>
    </source>
</evidence>
<evidence type="ECO:0000255" key="3">
    <source>
        <dbReference type="PROSITE-ProRule" id="PRU00808"/>
    </source>
</evidence>
<evidence type="ECO:0000269" key="4">
    <source>
    </source>
</evidence>
<evidence type="ECO:0000269" key="5">
    <source>
    </source>
</evidence>
<evidence type="ECO:0000269" key="6">
    <source>
    </source>
</evidence>
<evidence type="ECO:0000269" key="7">
    <source>
    </source>
</evidence>
<evidence type="ECO:0000269" key="8">
    <source>
    </source>
</evidence>
<evidence type="ECO:0000269" key="9">
    <source>
    </source>
</evidence>
<evidence type="ECO:0000269" key="10">
    <source>
    </source>
</evidence>
<evidence type="ECO:0000269" key="11">
    <source>
    </source>
</evidence>
<evidence type="ECO:0000269" key="12">
    <source>
    </source>
</evidence>
<evidence type="ECO:0000269" key="13">
    <source>
    </source>
</evidence>
<evidence type="ECO:0000269" key="14">
    <source>
    </source>
</evidence>
<evidence type="ECO:0000303" key="15">
    <source>
    </source>
</evidence>
<evidence type="ECO:0000303" key="16">
    <source>
    </source>
</evidence>
<evidence type="ECO:0000305" key="17"/>
<evidence type="ECO:0000312" key="18">
    <source>
        <dbReference type="HGNC" id="HGNC:9535"/>
    </source>
</evidence>
<evidence type="ECO:0007744" key="19">
    <source>
    </source>
</evidence>
<evidence type="ECO:0007744" key="20">
    <source>
    </source>
</evidence>
<evidence type="ECO:0007829" key="21">
    <source>
        <dbReference type="PDB" id="4R3O"/>
    </source>
</evidence>
<evidence type="ECO:0007829" key="22">
    <source>
        <dbReference type="PDB" id="5A0Q"/>
    </source>
</evidence>
<evidence type="ECO:0007829" key="23">
    <source>
        <dbReference type="PDB" id="5LE5"/>
    </source>
</evidence>
<evidence type="ECO:0007829" key="24">
    <source>
        <dbReference type="PDB" id="5LF0"/>
    </source>
</evidence>
<evidence type="ECO:0007829" key="25">
    <source>
        <dbReference type="PDB" id="5VFO"/>
    </source>
</evidence>
<evidence type="ECO:0007829" key="26">
    <source>
        <dbReference type="PDB" id="6E5B"/>
    </source>
</evidence>
<evidence type="ECO:0007829" key="27">
    <source>
        <dbReference type="PDB" id="7AWE"/>
    </source>
</evidence>
<keyword id="KW-0002">3D-structure</keyword>
<keyword id="KW-0007">Acetylation</keyword>
<keyword id="KW-0025">Alternative splicing</keyword>
<keyword id="KW-0963">Cytoplasm</keyword>
<keyword id="KW-0903">Direct protein sequencing</keyword>
<keyword id="KW-0325">Glycoprotein</keyword>
<keyword id="KW-0539">Nucleus</keyword>
<keyword id="KW-0597">Phosphoprotein</keyword>
<keyword id="KW-0647">Proteasome</keyword>
<keyword id="KW-1267">Proteomics identification</keyword>
<keyword id="KW-1185">Reference proteome</keyword>
<reference key="1">
    <citation type="journal article" date="1993" name="Mol. Gen. Genet.">
        <title>The prosomal RNA-binding protein p27K is a member of the alpha-type human prosomal gene family.</title>
        <authorList>
            <person name="Bey F."/>
            <person name="Pereira I.S."/>
            <person name="Coux O."/>
            <person name="Viegas-Pequignot E."/>
            <person name="Targa F.R."/>
            <person name="Nothwang H.G."/>
            <person name="Dutrillaux B."/>
            <person name="Scherrer K."/>
        </authorList>
    </citation>
    <scope>NUCLEOTIDE SEQUENCE [MRNA] (ISOFORM 1)</scope>
</reference>
<reference key="2">
    <citation type="submission" date="2004-06" db="EMBL/GenBank/DDBJ databases">
        <title>Cloning of human full open reading frames in Gateway(TM) system entry vector (pDONR201).</title>
        <authorList>
            <person name="Ebert L."/>
            <person name="Schick M."/>
            <person name="Neubert P."/>
            <person name="Schatten R."/>
            <person name="Henze S."/>
            <person name="Korn B."/>
        </authorList>
    </citation>
    <scope>NUCLEOTIDE SEQUENCE [LARGE SCALE MRNA] (ISOFORM 1)</scope>
</reference>
<reference key="3">
    <citation type="journal article" date="2004" name="Nat. Genet.">
        <title>Complete sequencing and characterization of 21,243 full-length human cDNAs.</title>
        <authorList>
            <person name="Ota T."/>
            <person name="Suzuki Y."/>
            <person name="Nishikawa T."/>
            <person name="Otsuki T."/>
            <person name="Sugiyama T."/>
            <person name="Irie R."/>
            <person name="Wakamatsu A."/>
            <person name="Hayashi K."/>
            <person name="Sato H."/>
            <person name="Nagai K."/>
            <person name="Kimura K."/>
            <person name="Makita H."/>
            <person name="Sekine M."/>
            <person name="Obayashi M."/>
            <person name="Nishi T."/>
            <person name="Shibahara T."/>
            <person name="Tanaka T."/>
            <person name="Ishii S."/>
            <person name="Yamamoto J."/>
            <person name="Saito K."/>
            <person name="Kawai Y."/>
            <person name="Isono Y."/>
            <person name="Nakamura Y."/>
            <person name="Nagahari K."/>
            <person name="Murakami K."/>
            <person name="Yasuda T."/>
            <person name="Iwayanagi T."/>
            <person name="Wagatsuma M."/>
            <person name="Shiratori A."/>
            <person name="Sudo H."/>
            <person name="Hosoiri T."/>
            <person name="Kaku Y."/>
            <person name="Kodaira H."/>
            <person name="Kondo H."/>
            <person name="Sugawara M."/>
            <person name="Takahashi M."/>
            <person name="Kanda K."/>
            <person name="Yokoi T."/>
            <person name="Furuya T."/>
            <person name="Kikkawa E."/>
            <person name="Omura Y."/>
            <person name="Abe K."/>
            <person name="Kamihara K."/>
            <person name="Katsuta N."/>
            <person name="Sato K."/>
            <person name="Tanikawa M."/>
            <person name="Yamazaki M."/>
            <person name="Ninomiya K."/>
            <person name="Ishibashi T."/>
            <person name="Yamashita H."/>
            <person name="Murakawa K."/>
            <person name="Fujimori K."/>
            <person name="Tanai H."/>
            <person name="Kimata M."/>
            <person name="Watanabe M."/>
            <person name="Hiraoka S."/>
            <person name="Chiba Y."/>
            <person name="Ishida S."/>
            <person name="Ono Y."/>
            <person name="Takiguchi S."/>
            <person name="Watanabe S."/>
            <person name="Yosida M."/>
            <person name="Hotuta T."/>
            <person name="Kusano J."/>
            <person name="Kanehori K."/>
            <person name="Takahashi-Fujii A."/>
            <person name="Hara H."/>
            <person name="Tanase T.-O."/>
            <person name="Nomura Y."/>
            <person name="Togiya S."/>
            <person name="Komai F."/>
            <person name="Hara R."/>
            <person name="Takeuchi K."/>
            <person name="Arita M."/>
            <person name="Imose N."/>
            <person name="Musashino K."/>
            <person name="Yuuki H."/>
            <person name="Oshima A."/>
            <person name="Sasaki N."/>
            <person name="Aotsuka S."/>
            <person name="Yoshikawa Y."/>
            <person name="Matsunawa H."/>
            <person name="Ichihara T."/>
            <person name="Shiohata N."/>
            <person name="Sano S."/>
            <person name="Moriya S."/>
            <person name="Momiyama H."/>
            <person name="Satoh N."/>
            <person name="Takami S."/>
            <person name="Terashima Y."/>
            <person name="Suzuki O."/>
            <person name="Nakagawa S."/>
            <person name="Senoh A."/>
            <person name="Mizoguchi H."/>
            <person name="Goto Y."/>
            <person name="Shimizu F."/>
            <person name="Wakebe H."/>
            <person name="Hishigaki H."/>
            <person name="Watanabe T."/>
            <person name="Sugiyama A."/>
            <person name="Takemoto M."/>
            <person name="Kawakami B."/>
            <person name="Yamazaki M."/>
            <person name="Watanabe K."/>
            <person name="Kumagai A."/>
            <person name="Itakura S."/>
            <person name="Fukuzumi Y."/>
            <person name="Fujimori Y."/>
            <person name="Komiyama M."/>
            <person name="Tashiro H."/>
            <person name="Tanigami A."/>
            <person name="Fujiwara T."/>
            <person name="Ono T."/>
            <person name="Yamada K."/>
            <person name="Fujii Y."/>
            <person name="Ozaki K."/>
            <person name="Hirao M."/>
            <person name="Ohmori Y."/>
            <person name="Kawabata A."/>
            <person name="Hikiji T."/>
            <person name="Kobatake N."/>
            <person name="Inagaki H."/>
            <person name="Ikema Y."/>
            <person name="Okamoto S."/>
            <person name="Okitani R."/>
            <person name="Kawakami T."/>
            <person name="Noguchi S."/>
            <person name="Itoh T."/>
            <person name="Shigeta K."/>
            <person name="Senba T."/>
            <person name="Matsumura K."/>
            <person name="Nakajima Y."/>
            <person name="Mizuno T."/>
            <person name="Morinaga M."/>
            <person name="Sasaki M."/>
            <person name="Togashi T."/>
            <person name="Oyama M."/>
            <person name="Hata H."/>
            <person name="Watanabe M."/>
            <person name="Komatsu T."/>
            <person name="Mizushima-Sugano J."/>
            <person name="Satoh T."/>
            <person name="Shirai Y."/>
            <person name="Takahashi Y."/>
            <person name="Nakagawa K."/>
            <person name="Okumura K."/>
            <person name="Nagase T."/>
            <person name="Nomura N."/>
            <person name="Kikuchi H."/>
            <person name="Masuho Y."/>
            <person name="Yamashita R."/>
            <person name="Nakai K."/>
            <person name="Yada T."/>
            <person name="Nakamura Y."/>
            <person name="Ohara O."/>
            <person name="Isogai T."/>
            <person name="Sugano S."/>
        </authorList>
    </citation>
    <scope>NUCLEOTIDE SEQUENCE [LARGE SCALE MRNA] (ISOFORMS 1; 2 AND 3)</scope>
    <source>
        <tissue>Cerebellum</tissue>
        <tissue>Testis</tissue>
    </source>
</reference>
<reference key="4">
    <citation type="journal article" date="2003" name="Nature">
        <title>The DNA sequence and analysis of human chromosome 14.</title>
        <authorList>
            <person name="Heilig R."/>
            <person name="Eckenberg R."/>
            <person name="Petit J.-L."/>
            <person name="Fonknechten N."/>
            <person name="Da Silva C."/>
            <person name="Cattolico L."/>
            <person name="Levy M."/>
            <person name="Barbe V."/>
            <person name="De Berardinis V."/>
            <person name="Ureta-Vidal A."/>
            <person name="Pelletier E."/>
            <person name="Vico V."/>
            <person name="Anthouard V."/>
            <person name="Rowen L."/>
            <person name="Madan A."/>
            <person name="Qin S."/>
            <person name="Sun H."/>
            <person name="Du H."/>
            <person name="Pepin K."/>
            <person name="Artiguenave F."/>
            <person name="Robert C."/>
            <person name="Cruaud C."/>
            <person name="Bruels T."/>
            <person name="Jaillon O."/>
            <person name="Friedlander L."/>
            <person name="Samson G."/>
            <person name="Brottier P."/>
            <person name="Cure S."/>
            <person name="Segurens B."/>
            <person name="Aniere F."/>
            <person name="Samain S."/>
            <person name="Crespeau H."/>
            <person name="Abbasi N."/>
            <person name="Aiach N."/>
            <person name="Boscus D."/>
            <person name="Dickhoff R."/>
            <person name="Dors M."/>
            <person name="Dubois I."/>
            <person name="Friedman C."/>
            <person name="Gouyvenoux M."/>
            <person name="James R."/>
            <person name="Madan A."/>
            <person name="Mairey-Estrada B."/>
            <person name="Mangenot S."/>
            <person name="Martins N."/>
            <person name="Menard M."/>
            <person name="Oztas S."/>
            <person name="Ratcliffe A."/>
            <person name="Shaffer T."/>
            <person name="Trask B."/>
            <person name="Vacherie B."/>
            <person name="Bellemere C."/>
            <person name="Belser C."/>
            <person name="Besnard-Gonnet M."/>
            <person name="Bartol-Mavel D."/>
            <person name="Boutard M."/>
            <person name="Briez-Silla S."/>
            <person name="Combette S."/>
            <person name="Dufosse-Laurent V."/>
            <person name="Ferron C."/>
            <person name="Lechaplais C."/>
            <person name="Louesse C."/>
            <person name="Muselet D."/>
            <person name="Magdelenat G."/>
            <person name="Pateau E."/>
            <person name="Petit E."/>
            <person name="Sirvain-Trukniewicz P."/>
            <person name="Trybou A."/>
            <person name="Vega-Czarny N."/>
            <person name="Bataille E."/>
            <person name="Bluet E."/>
            <person name="Bordelais I."/>
            <person name="Dubois M."/>
            <person name="Dumont C."/>
            <person name="Guerin T."/>
            <person name="Haffray S."/>
            <person name="Hammadi R."/>
            <person name="Muanga J."/>
            <person name="Pellouin V."/>
            <person name="Robert D."/>
            <person name="Wunderle E."/>
            <person name="Gauguet G."/>
            <person name="Roy A."/>
            <person name="Sainte-Marthe L."/>
            <person name="Verdier J."/>
            <person name="Verdier-Discala C."/>
            <person name="Hillier L.W."/>
            <person name="Fulton L."/>
            <person name="McPherson J."/>
            <person name="Matsuda F."/>
            <person name="Wilson R."/>
            <person name="Scarpelli C."/>
            <person name="Gyapay G."/>
            <person name="Wincker P."/>
            <person name="Saurin W."/>
            <person name="Quetier F."/>
            <person name="Waterston R."/>
            <person name="Hood L."/>
            <person name="Weissenbach J."/>
        </authorList>
    </citation>
    <scope>NUCLEOTIDE SEQUENCE [LARGE SCALE GENOMIC DNA]</scope>
</reference>
<reference key="5">
    <citation type="submission" date="2005-09" db="EMBL/GenBank/DDBJ databases">
        <authorList>
            <person name="Mural R.J."/>
            <person name="Istrail S."/>
            <person name="Sutton G.G."/>
            <person name="Florea L."/>
            <person name="Halpern A.L."/>
            <person name="Mobarry C.M."/>
            <person name="Lippert R."/>
            <person name="Walenz B."/>
            <person name="Shatkay H."/>
            <person name="Dew I."/>
            <person name="Miller J.R."/>
            <person name="Flanigan M.J."/>
            <person name="Edwards N.J."/>
            <person name="Bolanos R."/>
            <person name="Fasulo D."/>
            <person name="Halldorsson B.V."/>
            <person name="Hannenhalli S."/>
            <person name="Turner R."/>
            <person name="Yooseph S."/>
            <person name="Lu F."/>
            <person name="Nusskern D.R."/>
            <person name="Shue B.C."/>
            <person name="Zheng X.H."/>
            <person name="Zhong F."/>
            <person name="Delcher A.L."/>
            <person name="Huson D.H."/>
            <person name="Kravitz S.A."/>
            <person name="Mouchard L."/>
            <person name="Reinert K."/>
            <person name="Remington K.A."/>
            <person name="Clark A.G."/>
            <person name="Waterman M.S."/>
            <person name="Eichler E.E."/>
            <person name="Adams M.D."/>
            <person name="Hunkapiller M.W."/>
            <person name="Myers E.W."/>
            <person name="Venter J.C."/>
        </authorList>
    </citation>
    <scope>NUCLEOTIDE SEQUENCE [LARGE SCALE GENOMIC DNA]</scope>
</reference>
<reference key="6">
    <citation type="journal article" date="2004" name="Genome Res.">
        <title>The status, quality, and expansion of the NIH full-length cDNA project: the Mammalian Gene Collection (MGC).</title>
        <authorList>
            <consortium name="The MGC Project Team"/>
        </authorList>
    </citation>
    <scope>NUCLEOTIDE SEQUENCE [LARGE SCALE MRNA] (ISOFORM 1)</scope>
    <source>
        <tissue>Brain</tissue>
        <tissue>Lymph</tissue>
        <tissue>Skeletal muscle</tissue>
        <tissue>Skin</tissue>
    </source>
</reference>
<reference key="7">
    <citation type="submission" date="2008-12" db="UniProtKB">
        <authorList>
            <person name="Lubec G."/>
            <person name="Chen W.-Q."/>
            <person name="Sun Y."/>
        </authorList>
    </citation>
    <scope>PROTEIN SEQUENCE OF 12-43; 60-88; 105-116; 154-164; 172-181 AND 229-246</scope>
    <scope>IDENTIFICATION BY MASS SPECTROMETRY</scope>
    <source>
        <tissue>Fetal brain cortex</tissue>
    </source>
</reference>
<reference key="8">
    <citation type="journal article" date="1991" name="Biochim. Biophys. Acta">
        <title>The primary structures of four subunits of the human, high-molecular-weight proteinase, macropain (proteasome), are distinct but homologous.</title>
        <authorList>
            <person name="DeMartino G.N."/>
            <person name="Orth K."/>
            <person name="McCullough M.L."/>
            <person name="Lee L.W."/>
            <person name="Munn T.Z."/>
            <person name="Moomaw C.R."/>
            <person name="Dawson P.A."/>
            <person name="Slaughter C.A."/>
        </authorList>
    </citation>
    <scope>NUCLEOTIDE SEQUENCE [MRNA] OF 26-246 (ISOFORM 1)</scope>
    <scope>PARTIAL PROTEIN SEQUENCE</scope>
</reference>
<reference key="9">
    <citation type="journal article" date="1994" name="Biochem. Biophys. Res. Commun.">
        <title>Human proteasome subunits from 2-dimensional gels identified by partial sequencing.</title>
        <authorList>
            <person name="Kristensen P."/>
            <person name="Johnsen A.H."/>
            <person name="Uerkvitz W."/>
            <person name="Tanaka K."/>
            <person name="Hendil K.B."/>
        </authorList>
    </citation>
    <scope>PARTIAL PROTEIN SEQUENCE</scope>
</reference>
<reference key="10">
    <citation type="journal article" date="1996" name="Nature">
        <title>A role for the proteasome regulator PA28alpha in antigen presentation.</title>
        <authorList>
            <person name="Groettrup M."/>
            <person name="Soza A."/>
            <person name="Eggers M."/>
            <person name="Kuehn L."/>
            <person name="Dick T.P."/>
            <person name="Schild H."/>
            <person name="Rammensee H.G."/>
            <person name="Koszinowski U.H."/>
            <person name="Kloetzel P.M."/>
        </authorList>
    </citation>
    <scope>FUNCTION IN ANTIGEN PRESENTATION</scope>
</reference>
<reference key="11">
    <citation type="journal article" date="2002" name="Mol. Biol. Cell">
        <title>Clastosome: a subtype of nuclear body enriched in 19S and 20S proteasomes, ubiquitin, and protein substrates of proteasome.</title>
        <authorList>
            <person name="Lafarga M."/>
            <person name="Berciano M.T."/>
            <person name="Pena E."/>
            <person name="Mayo I."/>
            <person name="Castano J.G."/>
            <person name="Bohmann D."/>
            <person name="Rodrigues J.P."/>
            <person name="Tavanez J.P."/>
            <person name="Carmo-Fonseca M."/>
        </authorList>
    </citation>
    <scope>SUBCELLULAR LOCATION</scope>
</reference>
<reference key="12">
    <citation type="journal article" date="2004" name="Biomacromolecules">
        <title>20S proteasome prevents aggregation of heat-denatured proteins without PA700 regulatory subcomplex like a molecular chaperone.</title>
        <authorList>
            <person name="Yano M."/>
            <person name="Koumoto Y."/>
            <person name="Kanesaki Y."/>
            <person name="Wu X."/>
            <person name="Kido H."/>
        </authorList>
    </citation>
    <scope>FUNCTION</scope>
</reference>
<reference key="13">
    <citation type="journal article" date="2007" name="Biochemistry">
        <title>Mass spectrometric characterization of the affinity-purified human 26S proteasome complex.</title>
        <authorList>
            <person name="Wang X."/>
            <person name="Chen C.-F."/>
            <person name="Baker P.R."/>
            <person name="Chen P.-L."/>
            <person name="Kaiser P."/>
            <person name="Huang L."/>
        </authorList>
    </citation>
    <scope>IDENTIFICATION BY MASS SPECTROMETRY [LARGE SCALE ANALYSIS]</scope>
    <source>
        <tissue>Embryonic kidney</tissue>
    </source>
</reference>
<reference key="14">
    <citation type="journal article" date="2009" name="Science">
        <title>Lysine acetylation targets protein complexes and co-regulates major cellular functions.</title>
        <authorList>
            <person name="Choudhary C."/>
            <person name="Kumar C."/>
            <person name="Gnad F."/>
            <person name="Nielsen M.L."/>
            <person name="Rehman M."/>
            <person name="Walther T.C."/>
            <person name="Olsen J.V."/>
            <person name="Mann M."/>
        </authorList>
    </citation>
    <scope>ACETYLATION [LARGE SCALE ANALYSIS] AT LYS-102 AND LYS-104</scope>
    <scope>IDENTIFICATION BY MASS SPECTROMETRY [LARGE SCALE ANALYSIS]</scope>
</reference>
<reference key="15">
    <citation type="journal article" date="2011" name="BMC Syst. Biol.">
        <title>Initial characterization of the human central proteome.</title>
        <authorList>
            <person name="Burkard T.R."/>
            <person name="Planyavsky M."/>
            <person name="Kaupe I."/>
            <person name="Breitwieser F.P."/>
            <person name="Buerckstuemmer T."/>
            <person name="Bennett K.L."/>
            <person name="Superti-Furga G."/>
            <person name="Colinge J."/>
        </authorList>
    </citation>
    <scope>IDENTIFICATION BY MASS SPECTROMETRY [LARGE SCALE ANALYSIS]</scope>
</reference>
<reference key="16">
    <citation type="journal article" date="2012" name="PLoS ONE">
        <title>Human ALKBH4 interacts with proteins associated with transcription.</title>
        <authorList>
            <person name="Bjornstad L.G."/>
            <person name="Meza T.J."/>
            <person name="Otterlei M."/>
            <person name="Olafsrud S.M."/>
            <person name="Meza-Zepeda L.A."/>
            <person name="Falnes P.O."/>
        </authorList>
    </citation>
    <scope>INTERACTION WITH ALKBH4</scope>
</reference>
<reference key="17">
    <citation type="journal article" date="2013" name="Annu. Rev. Biochem.">
        <title>Molecular architecture and assembly of the eukaryotic proteasome.</title>
        <authorList>
            <person name="Tomko R.J. Jr."/>
            <person name="Hochstrasser M."/>
        </authorList>
    </citation>
    <scope>NOMENCLATURE</scope>
</reference>
<reference key="18">
    <citation type="journal article" date="2013" name="J. Proteome Res.">
        <title>Toward a comprehensive characterization of a human cancer cell phosphoproteome.</title>
        <authorList>
            <person name="Zhou H."/>
            <person name="Di Palma S."/>
            <person name="Preisinger C."/>
            <person name="Peng M."/>
            <person name="Polat A.N."/>
            <person name="Heck A.J."/>
            <person name="Mohammed S."/>
        </authorList>
    </citation>
    <scope>PHOSPHORYLATION [LARGE SCALE ANALYSIS] AT SER-17; SER-63 AND SER-64</scope>
    <scope>IDENTIFICATION BY MASS SPECTROMETRY [LARGE SCALE ANALYSIS]</scope>
    <source>
        <tissue>Cervix carcinoma</tissue>
        <tissue>Erythroleukemia</tissue>
    </source>
</reference>
<reference key="19">
    <citation type="journal article" date="2014" name="J. Proteomics">
        <title>An enzyme assisted RP-RPLC approach for in-depth analysis of human liver phosphoproteome.</title>
        <authorList>
            <person name="Bian Y."/>
            <person name="Song C."/>
            <person name="Cheng K."/>
            <person name="Dong M."/>
            <person name="Wang F."/>
            <person name="Huang J."/>
            <person name="Sun D."/>
            <person name="Wang L."/>
            <person name="Ye M."/>
            <person name="Zou H."/>
        </authorList>
    </citation>
    <scope>IDENTIFICATION BY MASS SPECTROMETRY [LARGE SCALE ANALYSIS]</scope>
    <source>
        <tissue>Liver</tissue>
    </source>
</reference>
<reference key="20">
    <citation type="journal article" date="2016" name="Biol. Chem.">
        <title>Human 20S proteasome activity towards fluorogenic peptides of various chain lengths.</title>
        <authorList>
            <person name="Rut W."/>
            <person name="Drag M."/>
        </authorList>
    </citation>
    <scope>FUNCTION</scope>
    <scope>CATALYTIC ACTIVITY</scope>
</reference>
<reference key="21">
    <citation type="journal article" date="2015" name="Nat. Commun.">
        <title>Cryo-EM reveals the conformation of a substrate analogue in the human 20S proteasome core.</title>
        <authorList>
            <person name="da Fonseca P.C."/>
            <person name="Morris E.P."/>
        </authorList>
    </citation>
    <scope>STRUCTURE BY ELECTRON MICROSCOPY (3.50 ANGSTROMS)</scope>
    <scope>SUBUNIT</scope>
</reference>
<reference key="22">
    <citation type="journal article" date="2015" name="Structure">
        <title>Crystal structure of the human 20S proteasome in complex with carfilzomib.</title>
        <authorList>
            <person name="Harshbarger W."/>
            <person name="Miller C."/>
            <person name="Diedrich C."/>
            <person name="Sacchettini J."/>
        </authorList>
    </citation>
    <scope>X-RAY CRYSTALLOGRAPHY (2.60 ANGSTROMS) OF 2-245</scope>
    <scope>SUBUNIT</scope>
</reference>
<reference key="23">
    <citation type="journal article" date="2016" name="Nat. Struct. Mol. Biol.">
        <title>An atomic structure of the human 26S proteasome.</title>
        <authorList>
            <person name="Huang X."/>
            <person name="Luan B."/>
            <person name="Wu J."/>
            <person name="Shi Y."/>
        </authorList>
    </citation>
    <scope>STRUCTURE BY ELECTRON MICROSCOPY (3.50 ANGSTROMS)</scope>
    <scope>SUBUNIT</scope>
</reference>
<reference key="24">
    <citation type="journal article" date="2016" name="Proc. Natl. Acad. Sci. U.S.A.">
        <title>Structure of the human 26S proteasome at a resolution of 3.9 Aa.</title>
        <authorList>
            <person name="Schweitzer A."/>
            <person name="Aufderheide A."/>
            <person name="Rudack T."/>
            <person name="Beck F."/>
            <person name="Pfeifer G."/>
            <person name="Plitzko J.M."/>
            <person name="Sakata E."/>
            <person name="Schulten K."/>
            <person name="Foerster F."/>
            <person name="Baumeister W."/>
        </authorList>
    </citation>
    <scope>STRUCTURE BY ELECTRON MICROSCOPY (4.02 ANGSTROMS)</scope>
    <scope>SUBUNIT</scope>
</reference>
<reference key="25">
    <citation type="journal article" date="2016" name="Science">
        <title>The inhibition mechanism of human 20S proteasomes enables next-generation inhibitor design.</title>
        <authorList>
            <person name="Schrader J."/>
            <person name="Henneberg F."/>
            <person name="Mata R.A."/>
            <person name="Tittmann K."/>
            <person name="Schneider T.R."/>
            <person name="Stark H."/>
            <person name="Bourenkov G."/>
            <person name="Chari A."/>
        </authorList>
    </citation>
    <scope>X-RAY CRYSTALLOGRAPHY (1.80 ANGSTROMS)</scope>
    <scope>SUBUNIT</scope>
</reference>
<reference key="26">
    <citation type="journal article" date="2021" name="Nature">
        <title>AKIRIN2 controls the nuclear import of proteasomes in vertebrates.</title>
        <authorList>
            <person name="de Almeida M."/>
            <person name="Hinterndorfer M."/>
            <person name="Brunner H."/>
            <person name="Grishkovskaya I."/>
            <person name="Singh K."/>
            <person name="Schleiffer A."/>
            <person name="Jude J."/>
            <person name="Deswal S."/>
            <person name="Kalis R."/>
            <person name="Vunjak M."/>
            <person name="Lendl T."/>
            <person name="Imre R."/>
            <person name="Roitinger E."/>
            <person name="Neumann T."/>
            <person name="Kandolf S."/>
            <person name="Schutzbier M."/>
            <person name="Mechtler K."/>
            <person name="Versteeg G.A."/>
            <person name="Haselbach D."/>
            <person name="Zuber J."/>
        </authorList>
    </citation>
    <scope>STRUCTURE BY ELECTRON MICROSCOPY (2.80 ANGSTROMS) IN COMPLEX WITH AKIRIN2</scope>
    <scope>SUBUNIT</scope>
    <scope>SUBCELLULAR LOCATION</scope>
</reference>
<comment type="function">
    <text evidence="5 9 14">Component of the 20S core proteasome complex involved in the proteolytic degradation of most intracellular proteins. This complex plays numerous essential roles within the cell by associating with different regulatory particles. Associated with two 19S regulatory particles, forms the 26S proteasome and thus participates in the ATP-dependent degradation of ubiquitinated proteins. The 26S proteasome plays a key role in the maintenance of protein homeostasis by removing misfolded or damaged proteins that could impair cellular functions, and by removing proteins whose functions are no longer required. Associated with the PA200 or PA28, the 20S proteasome mediates ubiquitin-independent protein degradation. This type of proteolysis is required in several pathways including spermatogenesis (20S-PA200 complex) or generation of a subset of MHC class I-presented antigenic peptides (20S-PA28 complex).</text>
</comment>
<comment type="subunit">
    <text evidence="6 7 8 10 11 12 13">The 26S proteasome consists of a 20S proteasome core and two 19S regulatory subunits (PubMed:25599644, PubMed:26133119, PubMed:27342858, PubMed:27428775, PubMed:27493187, PubMed:34711951). The 20S proteasome core is a barrel-shaped complex made of 28 subunits that are arranged in four stacked rings (PubMed:25599644, PubMed:26133119, PubMed:27342858, PubMed:27428775, PubMed:27493187, PubMed:34711951). The two outer rings are each formed by seven alpha subunits, and the two inner rings are formed by seven beta subunits (PubMed:25599644, PubMed:26133119, PubMed:27342858, PubMed:27428775, PubMed:27493187, PubMed:34711951). The proteolytic activity is exerted by three beta-subunits PSMB5, PSMB6 and PSMB7 (PubMed:25599644, PubMed:26133119, PubMed:27342858, PubMed:27428775, PubMed:27493187, PubMed:34711951). Interacts with ALKBH4 (PubMed:23145062).</text>
</comment>
<comment type="interaction">
    <interactant intactId="EBI-357793">
        <id>P60900</id>
    </interactant>
    <interactant intactId="EBI-741210">
        <id>Q0VDD7</id>
        <label>BRME1</label>
    </interactant>
    <organismsDiffer>false</organismsDiffer>
    <experiments>3</experiments>
</comment>
<comment type="interaction">
    <interactant intactId="EBI-357793">
        <id>P60900</id>
    </interactant>
    <interactant intactId="EBI-10979594">
        <id>Q8N9M1-2</id>
        <label>C19orf47</label>
    </interactant>
    <organismsDiffer>false</organismsDiffer>
    <experiments>3</experiments>
</comment>
<comment type="interaction">
    <interactant intactId="EBI-357793">
        <id>P60900</id>
    </interactant>
    <interactant intactId="EBI-5652260">
        <id>Q9BY67</id>
        <label>CADM1</label>
    </interactant>
    <organismsDiffer>false</organismsDiffer>
    <experiments>3</experiments>
</comment>
<comment type="interaction">
    <interactant intactId="EBI-357793">
        <id>P60900</id>
    </interactant>
    <interactant intactId="EBI-711389">
        <id>P84090</id>
        <label>ERH</label>
    </interactant>
    <organismsDiffer>false</organismsDiffer>
    <experiments>3</experiments>
</comment>
<comment type="interaction">
    <interactant intactId="EBI-357793">
        <id>P60900</id>
    </interactant>
    <interactant intactId="EBI-466029">
        <id>P42858</id>
        <label>HTT</label>
    </interactant>
    <organismsDiffer>false</organismsDiffer>
    <experiments>4</experiments>
</comment>
<comment type="interaction">
    <interactant intactId="EBI-357793">
        <id>P60900</id>
    </interactant>
    <interactant intactId="EBI-10172511">
        <id>Q9BYR5</id>
        <label>KRTAP4-2</label>
    </interactant>
    <organismsDiffer>false</organismsDiffer>
    <experiments>3</experiments>
</comment>
<comment type="interaction">
    <interactant intactId="EBI-357793">
        <id>P60900</id>
    </interactant>
    <interactant intactId="EBI-2805292">
        <id>Q9BT23</id>
        <label>LIMD2</label>
    </interactant>
    <organismsDiffer>false</organismsDiffer>
    <experiments>3</experiments>
</comment>
<comment type="interaction">
    <interactant intactId="EBI-357793">
        <id>P60900</id>
    </interactant>
    <interactant intactId="EBI-359527">
        <id>P62875</id>
        <label>POLR2L</label>
    </interactant>
    <organismsDiffer>false</organismsDiffer>
    <experiments>3</experiments>
</comment>
<comment type="interaction">
    <interactant intactId="EBI-357793">
        <id>P60900</id>
    </interactant>
    <interactant intactId="EBI-603262">
        <id>P25787</id>
        <label>PSMA2</label>
    </interactant>
    <organismsDiffer>false</organismsDiffer>
    <experiments>10</experiments>
</comment>
<comment type="interaction">
    <interactant intactId="EBI-357793">
        <id>P60900</id>
    </interactant>
    <interactant intactId="EBI-348380">
        <id>P25788</id>
        <label>PSMA3</label>
    </interactant>
    <organismsDiffer>false</organismsDiffer>
    <experiments>10</experiments>
</comment>
<comment type="interaction">
    <interactant intactId="EBI-357793">
        <id>P60900</id>
    </interactant>
    <interactant intactId="EBI-359310">
        <id>P25789</id>
        <label>PSMA4</label>
    </interactant>
    <organismsDiffer>false</organismsDiffer>
    <experiments>5</experiments>
</comment>
<comment type="interaction">
    <interactant intactId="EBI-357793">
        <id>P60900</id>
    </interactant>
    <interactant intactId="EBI-603272">
        <id>O14818</id>
        <label>PSMA7</label>
    </interactant>
    <organismsDiffer>false</organismsDiffer>
    <experiments>13</experiments>
</comment>
<comment type="interaction">
    <interactant intactId="EBI-357793">
        <id>P60900</id>
    </interactant>
    <interactant intactId="EBI-357622">
        <id>O43242</id>
        <label>PSMD3</label>
    </interactant>
    <organismsDiffer>false</organismsDiffer>
    <experiments>4</experiments>
</comment>
<comment type="interaction">
    <interactant intactId="EBI-357793">
        <id>P60900</id>
    </interactant>
    <interactant intactId="EBI-2130336">
        <id>Q96K19</id>
        <label>RNF170</label>
    </interactant>
    <organismsDiffer>false</organismsDiffer>
    <experiments>3</experiments>
</comment>
<comment type="interaction">
    <interactant intactId="EBI-357793">
        <id>P60900</id>
    </interactant>
    <interactant intactId="EBI-10217913">
        <id>Q14D33</id>
        <label>RTP5</label>
    </interactant>
    <organismsDiffer>false</organismsDiffer>
    <experiments>3</experiments>
</comment>
<comment type="interaction">
    <interactant intactId="EBI-357793">
        <id>P60900</id>
    </interactant>
    <interactant intactId="EBI-10173195">
        <id>A2RU48</id>
        <label>SMCO3</label>
    </interactant>
    <organismsDiffer>false</organismsDiffer>
    <experiments>3</experiments>
</comment>
<comment type="interaction">
    <interactant intactId="EBI-357793">
        <id>P60900</id>
    </interactant>
    <interactant intactId="EBI-11139477">
        <id>Q96N21</id>
        <label>TEPSIN</label>
    </interactant>
    <organismsDiffer>false</organismsDiffer>
    <experiments>3</experiments>
</comment>
<comment type="interaction">
    <interactant intactId="EBI-357793">
        <id>P60900</id>
    </interactant>
    <interactant intactId="EBI-739510">
        <id>Q9HCM9</id>
        <label>TRIM39</label>
    </interactant>
    <organismsDiffer>false</organismsDiffer>
    <experiments>3</experiments>
</comment>
<comment type="interaction">
    <interactant intactId="EBI-357793">
        <id>P60900</id>
    </interactant>
    <interactant intactId="EBI-11523450">
        <id>Q9HCM9-2</id>
        <label>TRIM39</label>
    </interactant>
    <organismsDiffer>false</organismsDiffer>
    <experiments>5</experiments>
</comment>
<comment type="interaction">
    <interactant intactId="EBI-357793">
        <id>P60900</id>
    </interactant>
    <interactant intactId="EBI-723389">
        <id>Q6FI91</id>
        <label>TSPYL</label>
    </interactant>
    <organismsDiffer>false</organismsDiffer>
    <experiments>3</experiments>
</comment>
<comment type="interaction">
    <interactant intactId="EBI-357793">
        <id>P60900</id>
    </interactant>
    <interactant intactId="EBI-1051183">
        <id>Q9Y5K5</id>
        <label>UCHL5</label>
    </interactant>
    <organismsDiffer>false</organismsDiffer>
    <experiments>5</experiments>
</comment>
<comment type="interaction">
    <interactant intactId="EBI-357793">
        <id>P60900</id>
    </interactant>
    <interactant intactId="EBI-5658292">
        <id>Q8NCP5</id>
        <label>ZBTB44</label>
    </interactant>
    <organismsDiffer>false</organismsDiffer>
    <experiments>3</experiments>
</comment>
<comment type="interaction">
    <interactant intactId="EBI-357793">
        <id>P60900</id>
    </interactant>
    <interactant intactId="EBI-2818641">
        <id>Q969J2</id>
        <label>ZKSCAN4</label>
    </interactant>
    <organismsDiffer>false</organismsDiffer>
    <experiments>3</experiments>
</comment>
<comment type="interaction">
    <interactant intactId="EBI-357793">
        <id>P60900</id>
    </interactant>
    <interactant intactId="EBI-3923453">
        <id>Q8TC21</id>
        <label>ZNF596</label>
    </interactant>
    <organismsDiffer>false</organismsDiffer>
    <experiments>3</experiments>
</comment>
<comment type="subcellular location">
    <subcellularLocation>
        <location evidence="2 4">Cytoplasm</location>
    </subcellularLocation>
    <subcellularLocation>
        <location evidence="4 13">Nucleus</location>
    </subcellularLocation>
    <text evidence="2 13">Translocated from the cytoplasm into the nucleus following interaction with AKIRIN2, which bridges the proteasome with the nuclear import receptor IPO9 (PubMed:34711951). Colocalizes with TRIM5 in cytoplasmic bodies (By similarity).</text>
</comment>
<comment type="alternative products">
    <event type="alternative splicing"/>
    <isoform>
        <id>P60900-1</id>
        <name>1</name>
        <sequence type="displayed"/>
    </isoform>
    <isoform>
        <id>P60900-2</id>
        <name>2</name>
        <sequence type="described" ref="VSP_054587"/>
    </isoform>
    <isoform>
        <id>P60900-3</id>
        <name>3</name>
        <sequence type="described" ref="VSP_054586"/>
    </isoform>
</comment>
<comment type="similarity">
    <text evidence="3">Belongs to the peptidase T1A family.</text>
</comment>
<proteinExistence type="evidence at protein level"/>
<dbReference type="EMBL" id="X59417">
    <property type="protein sequence ID" value="CAA42052.1"/>
    <property type="molecule type" value="mRNA"/>
</dbReference>
<dbReference type="EMBL" id="CR456944">
    <property type="protein sequence ID" value="CAG33225.1"/>
    <property type="molecule type" value="mRNA"/>
</dbReference>
<dbReference type="EMBL" id="AK298920">
    <property type="protein sequence ID" value="BAG61026.1"/>
    <property type="molecule type" value="mRNA"/>
</dbReference>
<dbReference type="EMBL" id="AK302008">
    <property type="protein sequence ID" value="BAG63411.1"/>
    <property type="molecule type" value="mRNA"/>
</dbReference>
<dbReference type="EMBL" id="AK313011">
    <property type="protein sequence ID" value="BAG35846.1"/>
    <property type="molecule type" value="mRNA"/>
</dbReference>
<dbReference type="EMBL" id="AK316223">
    <property type="protein sequence ID" value="BAH14594.1"/>
    <property type="molecule type" value="mRNA"/>
</dbReference>
<dbReference type="EMBL" id="AL121594">
    <property type="status" value="NOT_ANNOTATED_CDS"/>
    <property type="molecule type" value="Genomic_DNA"/>
</dbReference>
<dbReference type="EMBL" id="AL133163">
    <property type="status" value="NOT_ANNOTATED_CDS"/>
    <property type="molecule type" value="Genomic_DNA"/>
</dbReference>
<dbReference type="EMBL" id="CH471078">
    <property type="protein sequence ID" value="EAW65876.1"/>
    <property type="molecule type" value="Genomic_DNA"/>
</dbReference>
<dbReference type="EMBL" id="CH471078">
    <property type="protein sequence ID" value="EAW65877.1"/>
    <property type="molecule type" value="Genomic_DNA"/>
</dbReference>
<dbReference type="EMBL" id="BC002979">
    <property type="protein sequence ID" value="AAH02979.1"/>
    <property type="molecule type" value="mRNA"/>
</dbReference>
<dbReference type="EMBL" id="BC017882">
    <property type="protein sequence ID" value="AAH17882.1"/>
    <property type="molecule type" value="mRNA"/>
</dbReference>
<dbReference type="EMBL" id="BC022354">
    <property type="protein sequence ID" value="AAH22354.1"/>
    <property type="molecule type" value="mRNA"/>
</dbReference>
<dbReference type="EMBL" id="BC023659">
    <property type="protein sequence ID" value="AAH23659.1"/>
    <property type="molecule type" value="mRNA"/>
</dbReference>
<dbReference type="EMBL" id="BC070137">
    <property type="protein sequence ID" value="AAH70137.1"/>
    <property type="molecule type" value="mRNA"/>
</dbReference>
<dbReference type="EMBL" id="X61972">
    <property type="protein sequence ID" value="CAA43964.1"/>
    <property type="molecule type" value="mRNA"/>
</dbReference>
<dbReference type="CCDS" id="CCDS61437.1">
    <molecule id="P60900-2"/>
</dbReference>
<dbReference type="CCDS" id="CCDS61438.1">
    <molecule id="P60900-3"/>
</dbReference>
<dbReference type="CCDS" id="CCDS9655.1">
    <molecule id="P60900-1"/>
</dbReference>
<dbReference type="PIR" id="S30274">
    <property type="entry name" value="S30274"/>
</dbReference>
<dbReference type="RefSeq" id="NP_001269161.1">
    <molecule id="P60900-3"/>
    <property type="nucleotide sequence ID" value="NM_001282232.1"/>
</dbReference>
<dbReference type="RefSeq" id="NP_001269162.1">
    <molecule id="P60900-3"/>
    <property type="nucleotide sequence ID" value="NM_001282233.1"/>
</dbReference>
<dbReference type="RefSeq" id="NP_001269163.1">
    <molecule id="P60900-2"/>
    <property type="nucleotide sequence ID" value="NM_001282234.1"/>
</dbReference>
<dbReference type="RefSeq" id="NP_002782.1">
    <molecule id="P60900-1"/>
    <property type="nucleotide sequence ID" value="NM_002791.3"/>
</dbReference>
<dbReference type="RefSeq" id="XP_016876957.1">
    <property type="nucleotide sequence ID" value="XM_017021468.1"/>
</dbReference>
<dbReference type="PDB" id="4R3O">
    <property type="method" value="X-ray"/>
    <property type="resolution" value="2.60 A"/>
    <property type="chains" value="A/O=2-245"/>
</dbReference>
<dbReference type="PDB" id="4R67">
    <property type="method" value="X-ray"/>
    <property type="resolution" value="2.89 A"/>
    <property type="chains" value="A/O/c/q=2-245"/>
</dbReference>
<dbReference type="PDB" id="5A0Q">
    <property type="method" value="EM"/>
    <property type="resolution" value="3.50 A"/>
    <property type="chains" value="A/O=1-246"/>
</dbReference>
<dbReference type="PDB" id="5GJQ">
    <property type="method" value="EM"/>
    <property type="resolution" value="4.50 A"/>
    <property type="chains" value="B/h=1-246"/>
</dbReference>
<dbReference type="PDB" id="5GJR">
    <property type="method" value="EM"/>
    <property type="resolution" value="3.50 A"/>
    <property type="chains" value="B/h=1-246"/>
</dbReference>
<dbReference type="PDB" id="5L4G">
    <property type="method" value="EM"/>
    <property type="resolution" value="4.02 A"/>
    <property type="chains" value="A/N=1-246"/>
</dbReference>
<dbReference type="PDB" id="5LE5">
    <property type="method" value="X-ray"/>
    <property type="resolution" value="1.80 A"/>
    <property type="chains" value="G/U=1-246"/>
</dbReference>
<dbReference type="PDB" id="5LEX">
    <property type="method" value="X-ray"/>
    <property type="resolution" value="2.20 A"/>
    <property type="chains" value="G/U=1-246"/>
</dbReference>
<dbReference type="PDB" id="5LEY">
    <property type="method" value="X-ray"/>
    <property type="resolution" value="1.90 A"/>
    <property type="chains" value="G/U=1-246"/>
</dbReference>
<dbReference type="PDB" id="5LEZ">
    <property type="method" value="X-ray"/>
    <property type="resolution" value="2.19 A"/>
    <property type="chains" value="G/U=1-246"/>
</dbReference>
<dbReference type="PDB" id="5LF0">
    <property type="method" value="X-ray"/>
    <property type="resolution" value="2.41 A"/>
    <property type="chains" value="G/U=1-246"/>
</dbReference>
<dbReference type="PDB" id="5LF1">
    <property type="method" value="X-ray"/>
    <property type="resolution" value="2.00 A"/>
    <property type="chains" value="G/U=1-246"/>
</dbReference>
<dbReference type="PDB" id="5LF3">
    <property type="method" value="X-ray"/>
    <property type="resolution" value="2.10 A"/>
    <property type="chains" value="G/U=1-246"/>
</dbReference>
<dbReference type="PDB" id="5LF4">
    <property type="method" value="X-ray"/>
    <property type="resolution" value="1.99 A"/>
    <property type="chains" value="G/U=1-246"/>
</dbReference>
<dbReference type="PDB" id="5LF6">
    <property type="method" value="X-ray"/>
    <property type="resolution" value="2.07 A"/>
    <property type="chains" value="G/U=1-246"/>
</dbReference>
<dbReference type="PDB" id="5LF7">
    <property type="method" value="X-ray"/>
    <property type="resolution" value="2.00 A"/>
    <property type="chains" value="G/U=1-246"/>
</dbReference>
<dbReference type="PDB" id="5LN3">
    <property type="method" value="EM"/>
    <property type="resolution" value="6.80 A"/>
    <property type="chains" value="A=1-246"/>
</dbReference>
<dbReference type="PDB" id="5M32">
    <property type="method" value="EM"/>
    <property type="resolution" value="3.80 A"/>
    <property type="chains" value="G/U=1-246"/>
</dbReference>
<dbReference type="PDB" id="5T0C">
    <property type="method" value="EM"/>
    <property type="resolution" value="3.80 A"/>
    <property type="chains" value="AG/BG=2-246"/>
</dbReference>
<dbReference type="PDB" id="5T0G">
    <property type="method" value="EM"/>
    <property type="resolution" value="4.40 A"/>
    <property type="chains" value="G=2-246"/>
</dbReference>
<dbReference type="PDB" id="5T0H">
    <property type="method" value="EM"/>
    <property type="resolution" value="6.80 A"/>
    <property type="chains" value="G=2-246"/>
</dbReference>
<dbReference type="PDB" id="5T0I">
    <property type="method" value="EM"/>
    <property type="resolution" value="8.00 A"/>
    <property type="chains" value="G=2-246"/>
</dbReference>
<dbReference type="PDB" id="5T0J">
    <property type="method" value="EM"/>
    <property type="resolution" value="8.00 A"/>
    <property type="chains" value="G=2-246"/>
</dbReference>
<dbReference type="PDB" id="5VFO">
    <property type="method" value="EM"/>
    <property type="resolution" value="3.50 A"/>
    <property type="chains" value="G/g=5-244"/>
</dbReference>
<dbReference type="PDB" id="5VFP">
    <property type="method" value="EM"/>
    <property type="resolution" value="4.20 A"/>
    <property type="chains" value="G/g=5-244"/>
</dbReference>
<dbReference type="PDB" id="5VFQ">
    <property type="method" value="EM"/>
    <property type="resolution" value="4.20 A"/>
    <property type="chains" value="G/g=5-244"/>
</dbReference>
<dbReference type="PDB" id="5VFR">
    <property type="method" value="EM"/>
    <property type="resolution" value="4.90 A"/>
    <property type="chains" value="G/g=5-244"/>
</dbReference>
<dbReference type="PDB" id="5VFS">
    <property type="method" value="EM"/>
    <property type="resolution" value="3.60 A"/>
    <property type="chains" value="G/g=5-244"/>
</dbReference>
<dbReference type="PDB" id="5VFT">
    <property type="method" value="EM"/>
    <property type="resolution" value="7.00 A"/>
    <property type="chains" value="G/g=5-244"/>
</dbReference>
<dbReference type="PDB" id="5VFU">
    <property type="method" value="EM"/>
    <property type="resolution" value="5.80 A"/>
    <property type="chains" value="G/g=5-244"/>
</dbReference>
<dbReference type="PDB" id="6AVO">
    <property type="method" value="EM"/>
    <property type="resolution" value="3.80 A"/>
    <property type="chains" value="K/R=1-246"/>
</dbReference>
<dbReference type="PDB" id="6E5B">
    <property type="method" value="X-ray"/>
    <property type="resolution" value="2.77 A"/>
    <property type="chains" value="G/U=1-246"/>
</dbReference>
<dbReference type="PDB" id="6KWY">
    <property type="method" value="EM"/>
    <property type="resolution" value="2.72 A"/>
    <property type="chains" value="G/U=1-246"/>
</dbReference>
<dbReference type="PDB" id="6MSB">
    <property type="method" value="EM"/>
    <property type="resolution" value="3.00 A"/>
    <property type="chains" value="G/g=2-246"/>
</dbReference>
<dbReference type="PDB" id="6MSD">
    <property type="method" value="EM"/>
    <property type="resolution" value="3.20 A"/>
    <property type="chains" value="G/g=2-246"/>
</dbReference>
<dbReference type="PDB" id="6MSG">
    <property type="method" value="EM"/>
    <property type="resolution" value="3.50 A"/>
    <property type="chains" value="G/g=2-246"/>
</dbReference>
<dbReference type="PDB" id="6MSH">
    <property type="method" value="EM"/>
    <property type="resolution" value="3.60 A"/>
    <property type="chains" value="G/g=2-246"/>
</dbReference>
<dbReference type="PDB" id="6MSK">
    <property type="method" value="EM"/>
    <property type="resolution" value="3.20 A"/>
    <property type="chains" value="G/g=2-246"/>
</dbReference>
<dbReference type="PDB" id="6R70">
    <property type="method" value="EM"/>
    <property type="resolution" value="3.50 A"/>
    <property type="chains" value="G/U=2-245"/>
</dbReference>
<dbReference type="PDB" id="6REY">
    <property type="method" value="EM"/>
    <property type="resolution" value="3.00 A"/>
    <property type="chains" value="A/O=1-246"/>
</dbReference>
<dbReference type="PDB" id="6RGQ">
    <property type="method" value="EM"/>
    <property type="resolution" value="2.60 A"/>
    <property type="chains" value="A/O=1-246"/>
</dbReference>
<dbReference type="PDB" id="6WJD">
    <property type="method" value="EM"/>
    <property type="resolution" value="4.80 A"/>
    <property type="chains" value="G/g=2-246"/>
</dbReference>
<dbReference type="PDB" id="6WJN">
    <property type="method" value="EM"/>
    <property type="resolution" value="5.70 A"/>
    <property type="chains" value="G/g=5-244"/>
</dbReference>
<dbReference type="PDB" id="6XMJ">
    <property type="method" value="EM"/>
    <property type="resolution" value="3.00 A"/>
    <property type="chains" value="A=2-245"/>
</dbReference>
<dbReference type="PDB" id="7AWE">
    <property type="method" value="X-ray"/>
    <property type="resolution" value="2.29 A"/>
    <property type="chains" value="A/O=4-245"/>
</dbReference>
<dbReference type="PDB" id="7B12">
    <property type="method" value="X-ray"/>
    <property type="resolution" value="2.43 A"/>
    <property type="chains" value="A/O=4-245"/>
</dbReference>
<dbReference type="PDB" id="7LXV">
    <property type="method" value="EM"/>
    <property type="resolution" value="3.40 A"/>
    <property type="chains" value="G/U=1-246"/>
</dbReference>
<dbReference type="PDB" id="7NAN">
    <property type="method" value="EM"/>
    <property type="resolution" value="2.80 A"/>
    <property type="chains" value="G/U=1-246"/>
</dbReference>
<dbReference type="PDB" id="7NAO">
    <property type="method" value="EM"/>
    <property type="resolution" value="2.90 A"/>
    <property type="chains" value="G/U=1-246"/>
</dbReference>
<dbReference type="PDB" id="7NAP">
    <property type="method" value="EM"/>
    <property type="resolution" value="3.20 A"/>
    <property type="chains" value="G/U=1-246"/>
</dbReference>
<dbReference type="PDB" id="7NAQ">
    <property type="method" value="EM"/>
    <property type="resolution" value="3.20 A"/>
    <property type="chains" value="G/U=1-246"/>
</dbReference>
<dbReference type="PDB" id="7NHT">
    <property type="method" value="EM"/>
    <property type="resolution" value="2.80 A"/>
    <property type="chains" value="G=1-246"/>
</dbReference>
<dbReference type="PDB" id="7PG9">
    <property type="method" value="EM"/>
    <property type="resolution" value="3.70 A"/>
    <property type="chains" value="A/O=1-246"/>
</dbReference>
<dbReference type="PDB" id="7QXN">
    <property type="method" value="EM"/>
    <property type="resolution" value="3.70 A"/>
    <property type="chains" value="G/g=2-246"/>
</dbReference>
<dbReference type="PDB" id="7QXP">
    <property type="method" value="EM"/>
    <property type="resolution" value="3.60 A"/>
    <property type="chains" value="G/g=2-246"/>
</dbReference>
<dbReference type="PDB" id="7QXU">
    <property type="method" value="EM"/>
    <property type="resolution" value="4.30 A"/>
    <property type="chains" value="G/g=2-246"/>
</dbReference>
<dbReference type="PDB" id="7QXW">
    <property type="method" value="EM"/>
    <property type="resolution" value="4.10 A"/>
    <property type="chains" value="G/g=2-246"/>
</dbReference>
<dbReference type="PDB" id="7QXX">
    <property type="method" value="EM"/>
    <property type="resolution" value="4.40 A"/>
    <property type="chains" value="G/g=2-246"/>
</dbReference>
<dbReference type="PDB" id="7QY7">
    <property type="method" value="EM"/>
    <property type="resolution" value="4.70 A"/>
    <property type="chains" value="G/g=2-246"/>
</dbReference>
<dbReference type="PDB" id="7QYA">
    <property type="method" value="EM"/>
    <property type="resolution" value="4.80 A"/>
    <property type="chains" value="G/g=2-246"/>
</dbReference>
<dbReference type="PDB" id="7QYB">
    <property type="method" value="EM"/>
    <property type="resolution" value="4.10 A"/>
    <property type="chains" value="G/g=2-246"/>
</dbReference>
<dbReference type="PDB" id="7V5G">
    <property type="method" value="EM"/>
    <property type="resolution" value="4.47 A"/>
    <property type="chains" value="O/V=1-246"/>
</dbReference>
<dbReference type="PDB" id="7V5M">
    <property type="method" value="EM"/>
    <property type="resolution" value="3.88 A"/>
    <property type="chains" value="A/O=1-246"/>
</dbReference>
<dbReference type="PDB" id="7W37">
    <property type="method" value="EM"/>
    <property type="resolution" value="3.00 A"/>
    <property type="chains" value="G/g=1-246"/>
</dbReference>
<dbReference type="PDB" id="7W38">
    <property type="method" value="EM"/>
    <property type="resolution" value="3.10 A"/>
    <property type="chains" value="G/g=1-246"/>
</dbReference>
<dbReference type="PDB" id="7W39">
    <property type="method" value="EM"/>
    <property type="resolution" value="3.20 A"/>
    <property type="chains" value="G/g=1-246"/>
</dbReference>
<dbReference type="PDB" id="7W3A">
    <property type="method" value="EM"/>
    <property type="resolution" value="3.50 A"/>
    <property type="chains" value="G/g=1-246"/>
</dbReference>
<dbReference type="PDB" id="7W3B">
    <property type="method" value="EM"/>
    <property type="resolution" value="3.60 A"/>
    <property type="chains" value="G/g=1-246"/>
</dbReference>
<dbReference type="PDB" id="7W3C">
    <property type="method" value="EM"/>
    <property type="resolution" value="3.40 A"/>
    <property type="chains" value="G/g=1-246"/>
</dbReference>
<dbReference type="PDB" id="7W3F">
    <property type="method" value="EM"/>
    <property type="resolution" value="3.30 A"/>
    <property type="chains" value="G/g=1-246"/>
</dbReference>
<dbReference type="PDB" id="7W3G">
    <property type="method" value="EM"/>
    <property type="resolution" value="3.20 A"/>
    <property type="chains" value="G/g=1-246"/>
</dbReference>
<dbReference type="PDB" id="7W3H">
    <property type="method" value="EM"/>
    <property type="resolution" value="3.20 A"/>
    <property type="chains" value="G/g=1-246"/>
</dbReference>
<dbReference type="PDB" id="7W3I">
    <property type="method" value="EM"/>
    <property type="resolution" value="3.50 A"/>
    <property type="chains" value="G/g=1-246"/>
</dbReference>
<dbReference type="PDB" id="7W3J">
    <property type="method" value="EM"/>
    <property type="resolution" value="3.50 A"/>
    <property type="chains" value="G/g=1-246"/>
</dbReference>
<dbReference type="PDB" id="7W3K">
    <property type="method" value="EM"/>
    <property type="resolution" value="3.60 A"/>
    <property type="chains" value="G/g=1-246"/>
</dbReference>
<dbReference type="PDB" id="7W3M">
    <property type="method" value="EM"/>
    <property type="resolution" value="3.50 A"/>
    <property type="chains" value="G/g=1-246"/>
</dbReference>
<dbReference type="PDB" id="8BZL">
    <property type="method" value="X-ray"/>
    <property type="resolution" value="2.14 A"/>
    <property type="chains" value="G/U=1-246"/>
</dbReference>
<dbReference type="PDB" id="8CVR">
    <property type="method" value="EM"/>
    <property type="resolution" value="2.70 A"/>
    <property type="chains" value="A/O=1-246"/>
</dbReference>
<dbReference type="PDB" id="8CVS">
    <property type="method" value="EM"/>
    <property type="resolution" value="3.10 A"/>
    <property type="chains" value="G/U=1-246"/>
</dbReference>
<dbReference type="PDB" id="8CVT">
    <property type="method" value="EM"/>
    <property type="resolution" value="3.00 A"/>
    <property type="chains" value="G/g=1-246"/>
</dbReference>
<dbReference type="PDB" id="8CXB">
    <property type="method" value="EM"/>
    <property type="resolution" value="2.90 A"/>
    <property type="chains" value="G/U=1-246"/>
</dbReference>
<dbReference type="PDB" id="8JRI">
    <property type="method" value="EM"/>
    <property type="resolution" value="3.40 A"/>
    <property type="chains" value="G=1-246"/>
</dbReference>
<dbReference type="PDB" id="8JRT">
    <property type="method" value="EM"/>
    <property type="resolution" value="3.60 A"/>
    <property type="chains" value="G=1-246"/>
</dbReference>
<dbReference type="PDB" id="8JTI">
    <property type="method" value="EM"/>
    <property type="resolution" value="3.80 A"/>
    <property type="chains" value="G=1-246"/>
</dbReference>
<dbReference type="PDB" id="8K0G">
    <property type="method" value="EM"/>
    <property type="resolution" value="3.80 A"/>
    <property type="chains" value="G=1-246"/>
</dbReference>
<dbReference type="PDB" id="8QYJ">
    <property type="method" value="EM"/>
    <property type="resolution" value="2.73 A"/>
    <property type="chains" value="G=1-246"/>
</dbReference>
<dbReference type="PDB" id="8QYL">
    <property type="method" value="EM"/>
    <property type="resolution" value="2.67 A"/>
    <property type="chains" value="G=1-246"/>
</dbReference>
<dbReference type="PDB" id="8QYM">
    <property type="method" value="EM"/>
    <property type="resolution" value="2.73 A"/>
    <property type="chains" value="G=1-246"/>
</dbReference>
<dbReference type="PDB" id="8QYN">
    <property type="method" value="EM"/>
    <property type="resolution" value="2.88 A"/>
    <property type="chains" value="G=1-246"/>
</dbReference>
<dbReference type="PDB" id="8QYO">
    <property type="method" value="EM"/>
    <property type="resolution" value="2.84 A"/>
    <property type="chains" value="G/U=1-246"/>
</dbReference>
<dbReference type="PDB" id="8QYS">
    <property type="method" value="EM"/>
    <property type="resolution" value="3.89 A"/>
    <property type="chains" value="G/X=1-244"/>
</dbReference>
<dbReference type="PDB" id="8QZ9">
    <property type="method" value="EM"/>
    <property type="resolution" value="2.95 A"/>
    <property type="chains" value="G=1-246"/>
</dbReference>
<dbReference type="PDB" id="8TM3">
    <property type="method" value="EM"/>
    <property type="resolution" value="3.00 A"/>
    <property type="chains" value="G=1-246"/>
</dbReference>
<dbReference type="PDB" id="8TM4">
    <property type="method" value="EM"/>
    <property type="resolution" value="3.00 A"/>
    <property type="chains" value="G=1-246"/>
</dbReference>
<dbReference type="PDB" id="8TM5">
    <property type="method" value="EM"/>
    <property type="resolution" value="3.00 A"/>
    <property type="chains" value="G=1-246"/>
</dbReference>
<dbReference type="PDB" id="8TM6">
    <property type="method" value="EM"/>
    <property type="resolution" value="2.80 A"/>
    <property type="chains" value="G/U=1-246"/>
</dbReference>
<dbReference type="PDB" id="8UD9">
    <property type="method" value="EM"/>
    <property type="resolution" value="2.04 A"/>
    <property type="chains" value="A/O=1-246"/>
</dbReference>
<dbReference type="PDB" id="8USB">
    <property type="method" value="EM"/>
    <property type="resolution" value="2.73 A"/>
    <property type="chains" value="G=1-246"/>
</dbReference>
<dbReference type="PDB" id="8USC">
    <property type="method" value="EM"/>
    <property type="resolution" value="3.10 A"/>
    <property type="chains" value="G=1-246"/>
</dbReference>
<dbReference type="PDB" id="8YIX">
    <property type="method" value="EM"/>
    <property type="resolution" value="2.91 A"/>
    <property type="chains" value="G=1-246"/>
</dbReference>
<dbReference type="PDB" id="8YIY">
    <property type="method" value="EM"/>
    <property type="resolution" value="3.41 A"/>
    <property type="chains" value="G/U=1-246"/>
</dbReference>
<dbReference type="PDB" id="8YIZ">
    <property type="method" value="EM"/>
    <property type="resolution" value="3.79 A"/>
    <property type="chains" value="G/U=1-246"/>
</dbReference>
<dbReference type="PDB" id="9E8G">
    <property type="method" value="EM"/>
    <property type="resolution" value="3.01 A"/>
    <property type="chains" value="G=1-246"/>
</dbReference>
<dbReference type="PDB" id="9E8H">
    <property type="method" value="EM"/>
    <property type="resolution" value="2.90 A"/>
    <property type="chains" value="G=1-246"/>
</dbReference>
<dbReference type="PDB" id="9E8I">
    <property type="method" value="EM"/>
    <property type="resolution" value="2.87 A"/>
    <property type="chains" value="G=1-246"/>
</dbReference>
<dbReference type="PDB" id="9E8J">
    <property type="method" value="EM"/>
    <property type="resolution" value="3.47 A"/>
    <property type="chains" value="G=1-246"/>
</dbReference>
<dbReference type="PDB" id="9E8K">
    <property type="method" value="EM"/>
    <property type="resolution" value="4.08 A"/>
    <property type="chains" value="G=1-246"/>
</dbReference>
<dbReference type="PDB" id="9E8L">
    <property type="method" value="EM"/>
    <property type="resolution" value="3.59 A"/>
    <property type="chains" value="G=1-246"/>
</dbReference>
<dbReference type="PDB" id="9E8N">
    <property type="method" value="EM"/>
    <property type="resolution" value="3.62 A"/>
    <property type="chains" value="G=1-246"/>
</dbReference>
<dbReference type="PDB" id="9E8O">
    <property type="method" value="EM"/>
    <property type="resolution" value="3.10 A"/>
    <property type="chains" value="G=1-246"/>
</dbReference>
<dbReference type="PDB" id="9E8Q">
    <property type="method" value="EM"/>
    <property type="resolution" value="3.16 A"/>
    <property type="chains" value="G=1-246"/>
</dbReference>
<dbReference type="PDB" id="9HMN">
    <property type="method" value="EM"/>
    <property type="resolution" value="2.55 A"/>
    <property type="chains" value="A/O=1-246"/>
</dbReference>
<dbReference type="PDBsum" id="4R3O"/>
<dbReference type="PDBsum" id="4R67"/>
<dbReference type="PDBsum" id="5A0Q"/>
<dbReference type="PDBsum" id="5GJQ"/>
<dbReference type="PDBsum" id="5GJR"/>
<dbReference type="PDBsum" id="5L4G"/>
<dbReference type="PDBsum" id="5LE5"/>
<dbReference type="PDBsum" id="5LEX"/>
<dbReference type="PDBsum" id="5LEY"/>
<dbReference type="PDBsum" id="5LEZ"/>
<dbReference type="PDBsum" id="5LF0"/>
<dbReference type="PDBsum" id="5LF1"/>
<dbReference type="PDBsum" id="5LF3"/>
<dbReference type="PDBsum" id="5LF4"/>
<dbReference type="PDBsum" id="5LF6"/>
<dbReference type="PDBsum" id="5LF7"/>
<dbReference type="PDBsum" id="5LN3"/>
<dbReference type="PDBsum" id="5M32"/>
<dbReference type="PDBsum" id="5T0C"/>
<dbReference type="PDBsum" id="5T0G"/>
<dbReference type="PDBsum" id="5T0H"/>
<dbReference type="PDBsum" id="5T0I"/>
<dbReference type="PDBsum" id="5T0J"/>
<dbReference type="PDBsum" id="5VFO"/>
<dbReference type="PDBsum" id="5VFP"/>
<dbReference type="PDBsum" id="5VFQ"/>
<dbReference type="PDBsum" id="5VFR"/>
<dbReference type="PDBsum" id="5VFS"/>
<dbReference type="PDBsum" id="5VFT"/>
<dbReference type="PDBsum" id="5VFU"/>
<dbReference type="PDBsum" id="6AVO"/>
<dbReference type="PDBsum" id="6E5B"/>
<dbReference type="PDBsum" id="6KWY"/>
<dbReference type="PDBsum" id="6MSB"/>
<dbReference type="PDBsum" id="6MSD"/>
<dbReference type="PDBsum" id="6MSG"/>
<dbReference type="PDBsum" id="6MSH"/>
<dbReference type="PDBsum" id="6MSK"/>
<dbReference type="PDBsum" id="6R70"/>
<dbReference type="PDBsum" id="6REY"/>
<dbReference type="PDBsum" id="6RGQ"/>
<dbReference type="PDBsum" id="6WJD"/>
<dbReference type="PDBsum" id="6WJN"/>
<dbReference type="PDBsum" id="6XMJ"/>
<dbReference type="PDBsum" id="7AWE"/>
<dbReference type="PDBsum" id="7B12"/>
<dbReference type="PDBsum" id="7LXV"/>
<dbReference type="PDBsum" id="7NAN"/>
<dbReference type="PDBsum" id="7NAO"/>
<dbReference type="PDBsum" id="7NAP"/>
<dbReference type="PDBsum" id="7NAQ"/>
<dbReference type="PDBsum" id="7NHT"/>
<dbReference type="PDBsum" id="7PG9"/>
<dbReference type="PDBsum" id="7QXN"/>
<dbReference type="PDBsum" id="7QXP"/>
<dbReference type="PDBsum" id="7QXU"/>
<dbReference type="PDBsum" id="7QXW"/>
<dbReference type="PDBsum" id="7QXX"/>
<dbReference type="PDBsum" id="7QY7"/>
<dbReference type="PDBsum" id="7QYA"/>
<dbReference type="PDBsum" id="7QYB"/>
<dbReference type="PDBsum" id="7V5G"/>
<dbReference type="PDBsum" id="7V5M"/>
<dbReference type="PDBsum" id="7W37"/>
<dbReference type="PDBsum" id="7W38"/>
<dbReference type="PDBsum" id="7W39"/>
<dbReference type="PDBsum" id="7W3A"/>
<dbReference type="PDBsum" id="7W3B"/>
<dbReference type="PDBsum" id="7W3C"/>
<dbReference type="PDBsum" id="7W3F"/>
<dbReference type="PDBsum" id="7W3G"/>
<dbReference type="PDBsum" id="7W3H"/>
<dbReference type="PDBsum" id="7W3I"/>
<dbReference type="PDBsum" id="7W3J"/>
<dbReference type="PDBsum" id="7W3K"/>
<dbReference type="PDBsum" id="7W3M"/>
<dbReference type="PDBsum" id="8BZL"/>
<dbReference type="PDBsum" id="8CVR"/>
<dbReference type="PDBsum" id="8CVS"/>
<dbReference type="PDBsum" id="8CVT"/>
<dbReference type="PDBsum" id="8CXB"/>
<dbReference type="PDBsum" id="8JRI"/>
<dbReference type="PDBsum" id="8JRT"/>
<dbReference type="PDBsum" id="8JTI"/>
<dbReference type="PDBsum" id="8K0G"/>
<dbReference type="PDBsum" id="8QYJ"/>
<dbReference type="PDBsum" id="8QYL"/>
<dbReference type="PDBsum" id="8QYM"/>
<dbReference type="PDBsum" id="8QYN"/>
<dbReference type="PDBsum" id="8QYO"/>
<dbReference type="PDBsum" id="8QYS"/>
<dbReference type="PDBsum" id="8QZ9"/>
<dbReference type="PDBsum" id="8TM3"/>
<dbReference type="PDBsum" id="8TM4"/>
<dbReference type="PDBsum" id="8TM5"/>
<dbReference type="PDBsum" id="8TM6"/>
<dbReference type="PDBsum" id="8UD9"/>
<dbReference type="PDBsum" id="8USB"/>
<dbReference type="PDBsum" id="8USC"/>
<dbReference type="PDBsum" id="8YIX"/>
<dbReference type="PDBsum" id="8YIY"/>
<dbReference type="PDBsum" id="8YIZ"/>
<dbReference type="PDBsum" id="9E8G"/>
<dbReference type="PDBsum" id="9E8H"/>
<dbReference type="PDBsum" id="9E8I"/>
<dbReference type="PDBsum" id="9E8J"/>
<dbReference type="PDBsum" id="9E8K"/>
<dbReference type="PDBsum" id="9E8L"/>
<dbReference type="PDBsum" id="9E8N"/>
<dbReference type="PDBsum" id="9E8O"/>
<dbReference type="PDBsum" id="9E8Q"/>
<dbReference type="PDBsum" id="9HMN"/>
<dbReference type="EMDB" id="EMD-0781"/>
<dbReference type="EMDB" id="EMD-12341"/>
<dbReference type="EMDB" id="EMD-13389"/>
<dbReference type="EMDB" id="EMD-14201"/>
<dbReference type="EMDB" id="EMD-14202"/>
<dbReference type="EMDB" id="EMD-14203"/>
<dbReference type="EMDB" id="EMD-14204"/>
<dbReference type="EMDB" id="EMD-14205"/>
<dbReference type="EMDB" id="EMD-14209"/>
<dbReference type="EMDB" id="EMD-14210"/>
<dbReference type="EMDB" id="EMD-14211"/>
<dbReference type="EMDB" id="EMD-18755"/>
<dbReference type="EMDB" id="EMD-18757"/>
<dbReference type="EMDB" id="EMD-18758"/>
<dbReference type="EMDB" id="EMD-18759"/>
<dbReference type="EMDB" id="EMD-18760"/>
<dbReference type="EMDB" id="EMD-18761"/>
<dbReference type="EMDB" id="EMD-18773"/>
<dbReference type="EMDB" id="EMD-21691"/>
<dbReference type="EMDB" id="EMD-21696"/>
<dbReference type="EMDB" id="EMD-22259"/>
<dbReference type="EMDB" id="EMD-23576"/>
<dbReference type="EMDB" id="EMD-24275"/>
<dbReference type="EMDB" id="EMD-24276"/>
<dbReference type="EMDB" id="EMD-24277"/>
<dbReference type="EMDB" id="EMD-24278"/>
<dbReference type="EMDB" id="EMD-27013"/>
<dbReference type="EMDB" id="EMD-27015"/>
<dbReference type="EMDB" id="EMD-27018"/>
<dbReference type="EMDB" id="EMD-2981"/>
<dbReference type="EMDB" id="EMD-31724"/>
<dbReference type="EMDB" id="EMD-31727"/>
<dbReference type="EMDB" id="EMD-32272"/>
<dbReference type="EMDB" id="EMD-32273"/>
<dbReference type="EMDB" id="EMD-32274"/>
<dbReference type="EMDB" id="EMD-32275"/>
<dbReference type="EMDB" id="EMD-32276"/>
<dbReference type="EMDB" id="EMD-32277"/>
<dbReference type="EMDB" id="EMD-32278"/>
<dbReference type="EMDB" id="EMD-32279"/>
<dbReference type="EMDB" id="EMD-32280"/>
<dbReference type="EMDB" id="EMD-32281"/>
<dbReference type="EMDB" id="EMD-32282"/>
<dbReference type="EMDB" id="EMD-32283"/>
<dbReference type="EMDB" id="EMD-32284"/>
<dbReference type="EMDB" id="EMD-36598"/>
<dbReference type="EMDB" id="EMD-36605"/>
<dbReference type="EMDB" id="EMD-36645"/>
<dbReference type="EMDB" id="EMD-36764"/>
<dbReference type="EMDB" id="EMD-39332"/>
<dbReference type="EMDB" id="EMD-39333"/>
<dbReference type="EMDB" id="EMD-39334"/>
<dbReference type="EMDB" id="EMD-4089"/>
<dbReference type="EMDB" id="EMD-41377"/>
<dbReference type="EMDB" id="EMD-41378"/>
<dbReference type="EMDB" id="EMD-41379"/>
<dbReference type="EMDB" id="EMD-41380"/>
<dbReference type="EMDB" id="EMD-42148"/>
<dbReference type="EMDB" id="EMD-42506"/>
<dbReference type="EMDB" id="EMD-42507"/>
<dbReference type="EMDB" id="EMD-4738"/>
<dbReference type="EMDB" id="EMD-47719"/>
<dbReference type="EMDB" id="EMD-47720"/>
<dbReference type="EMDB" id="EMD-47721"/>
<dbReference type="EMDB" id="EMD-47722"/>
<dbReference type="EMDB" id="EMD-47723"/>
<dbReference type="EMDB" id="EMD-47724"/>
<dbReference type="EMDB" id="EMD-47725"/>
<dbReference type="EMDB" id="EMD-47726"/>
<dbReference type="EMDB" id="EMD-47727"/>
<dbReference type="EMDB" id="EMD-4860"/>
<dbReference type="EMDB" id="EMD-4877"/>
<dbReference type="EMDB" id="EMD-52296"/>
<dbReference type="EMDB" id="EMD-60138"/>
<dbReference type="EMDB" id="EMD-60139"/>
<dbReference type="EMDB" id="EMD-7010"/>
<dbReference type="EMDB" id="EMD-8662"/>
<dbReference type="EMDB" id="EMD-8663"/>
<dbReference type="EMDB" id="EMD-8664"/>
<dbReference type="EMDB" id="EMD-8665"/>
<dbReference type="EMDB" id="EMD-8666"/>
<dbReference type="EMDB" id="EMD-8667"/>
<dbReference type="EMDB" id="EMD-8668"/>
<dbReference type="EMDB" id="EMD-9216"/>
<dbReference type="EMDB" id="EMD-9217"/>
<dbReference type="EMDB" id="EMD-9218"/>
<dbReference type="EMDB" id="EMD-9219"/>
<dbReference type="EMDB" id="EMD-9220"/>
<dbReference type="EMDB" id="EMD-9221"/>
<dbReference type="EMDB" id="EMD-9222"/>
<dbReference type="EMDB" id="EMD-9512"/>
<dbReference type="SMR" id="P60900"/>
<dbReference type="BioGRID" id="111660">
    <property type="interactions" value="311"/>
</dbReference>
<dbReference type="ComplexPortal" id="CPX-5993">
    <property type="entry name" value="26S proteasome complex"/>
</dbReference>
<dbReference type="ComplexPortal" id="CPX-8806">
    <property type="entry name" value="20S proteasome complex"/>
</dbReference>
<dbReference type="ComplexPortal" id="CPX-8841">
    <property type="entry name" value="PA200-20S single-capped proteasome"/>
</dbReference>
<dbReference type="ComplexPortal" id="CPX-8842">
    <property type="entry name" value="PA28-alphabeta double-capped 20S proteasome complex"/>
</dbReference>
<dbReference type="ComplexPortal" id="CPX-9001">
    <property type="entry name" value="PA28-gamma single-capped 20S proteasome complex"/>
</dbReference>
<dbReference type="ComplexPortal" id="CPX-9002">
    <property type="entry name" value="PA28-alphabeta single-capped 20S proteasome complex"/>
</dbReference>
<dbReference type="ComplexPortal" id="CPX-9003">
    <property type="entry name" value="20S immunoproteasome complex"/>
</dbReference>
<dbReference type="ComplexPortal" id="CPX-9004">
    <property type="entry name" value="20S thymoproteasome complex"/>
</dbReference>
<dbReference type="ComplexPortal" id="CPX-9021">
    <property type="entry name" value="20S spermatoproteasome complex"/>
</dbReference>
<dbReference type="ComplexPortal" id="CPX-9022">
    <property type="entry name" value="PA28-gamma double-capped 20S proteasome complex"/>
</dbReference>
<dbReference type="ComplexPortal" id="CPX-9063">
    <property type="entry name" value="PA200-20S-PA200 double-capped proteasome complex"/>
</dbReference>
<dbReference type="ComplexPortal" id="CPX-9082">
    <property type="entry name" value="19S-20S-PA28-alphabeta hybrid proteasome complex"/>
</dbReference>
<dbReference type="ComplexPortal" id="CPX-9085">
    <property type="entry name" value="19S-20S-PA28-gamma hybrid proteasome complex"/>
</dbReference>
<dbReference type="ComplexPortal" id="CPX-9086">
    <property type="entry name" value="30S proteasome complex"/>
</dbReference>
<dbReference type="CORUM" id="P60900"/>
<dbReference type="DIP" id="DIP-29367N"/>
<dbReference type="FunCoup" id="P60900">
    <property type="interactions" value="1747"/>
</dbReference>
<dbReference type="IntAct" id="P60900">
    <property type="interactions" value="115"/>
</dbReference>
<dbReference type="MINT" id="P60900"/>
<dbReference type="STRING" id="9606.ENSP00000261479"/>
<dbReference type="BindingDB" id="P60900"/>
<dbReference type="ChEMBL" id="CHEMBL2364701"/>
<dbReference type="DrugBank" id="DB08515">
    <property type="generic name" value="(3AR,6R,6AS)-6-((S)-((S)-CYCLOHEX-2-ENYL)(HYDROXY)METHYL)-6A-METHYL-4-OXO-HEXAHYDRO-2H-FURO[3,2-C]PYRROLE-6-CARBALDEHYDE"/>
</dbReference>
<dbReference type="MEROPS" id="T01.971"/>
<dbReference type="GlyCosmos" id="P60900">
    <property type="glycosylation" value="1 site, No reported glycans"/>
</dbReference>
<dbReference type="GlyGen" id="P60900">
    <property type="glycosylation" value="2 sites, 1 O-linked glycan (1 site)"/>
</dbReference>
<dbReference type="iPTMnet" id="P60900"/>
<dbReference type="MetOSite" id="P60900"/>
<dbReference type="PhosphoSitePlus" id="P60900"/>
<dbReference type="SwissPalm" id="P60900"/>
<dbReference type="BioMuta" id="PSMA6"/>
<dbReference type="DMDM" id="46397659"/>
<dbReference type="REPRODUCTION-2DPAGE" id="IPI00029623"/>
<dbReference type="jPOST" id="P60900"/>
<dbReference type="MassIVE" id="P60900"/>
<dbReference type="PaxDb" id="9606-ENSP00000261479"/>
<dbReference type="PeptideAtlas" id="P60900"/>
<dbReference type="ProteomicsDB" id="4898"/>
<dbReference type="ProteomicsDB" id="5443"/>
<dbReference type="ProteomicsDB" id="57236">
    <molecule id="P60900-1"/>
</dbReference>
<dbReference type="Pumba" id="P60900"/>
<dbReference type="TopDownProteomics" id="P60900-1">
    <molecule id="P60900-1"/>
</dbReference>
<dbReference type="Antibodypedia" id="155">
    <property type="antibodies" value="514 antibodies from 34 providers"/>
</dbReference>
<dbReference type="DNASU" id="5687"/>
<dbReference type="Ensembl" id="ENST00000261479.9">
    <molecule id="P60900-1"/>
    <property type="protein sequence ID" value="ENSP00000261479.4"/>
    <property type="gene ID" value="ENSG00000100902.11"/>
</dbReference>
<dbReference type="Ensembl" id="ENST00000540871.5">
    <molecule id="P60900-2"/>
    <property type="protein sequence ID" value="ENSP00000444844.1"/>
    <property type="gene ID" value="ENSG00000100902.11"/>
</dbReference>
<dbReference type="Ensembl" id="ENST00000555764.5">
    <molecule id="P60900-3"/>
    <property type="protein sequence ID" value="ENSP00000452566.1"/>
    <property type="gene ID" value="ENSG00000100902.11"/>
</dbReference>
<dbReference type="Ensembl" id="ENST00000622405.4">
    <molecule id="P60900-3"/>
    <property type="protein sequence ID" value="ENSP00000479620.1"/>
    <property type="gene ID" value="ENSG00000100902.11"/>
</dbReference>
<dbReference type="GeneID" id="5687"/>
<dbReference type="KEGG" id="hsa:5687"/>
<dbReference type="MANE-Select" id="ENST00000261479.9">
    <property type="protein sequence ID" value="ENSP00000261479.4"/>
    <property type="RefSeq nucleotide sequence ID" value="NM_002791.3"/>
    <property type="RefSeq protein sequence ID" value="NP_002782.1"/>
</dbReference>
<dbReference type="UCSC" id="uc001wtd.5">
    <molecule id="P60900-1"/>
    <property type="organism name" value="human"/>
</dbReference>
<dbReference type="AGR" id="HGNC:9535"/>
<dbReference type="CTD" id="5687"/>
<dbReference type="DisGeNET" id="5687"/>
<dbReference type="GeneCards" id="PSMA6"/>
<dbReference type="HGNC" id="HGNC:9535">
    <property type="gene designation" value="PSMA6"/>
</dbReference>
<dbReference type="HPA" id="ENSG00000100902">
    <property type="expression patterns" value="Low tissue specificity"/>
</dbReference>
<dbReference type="MalaCards" id="PSMA6"/>
<dbReference type="MIM" id="602855">
    <property type="type" value="gene"/>
</dbReference>
<dbReference type="neXtProt" id="NX_P60900"/>
<dbReference type="OpenTargets" id="ENSG00000100902"/>
<dbReference type="PharmGKB" id="PA33880"/>
<dbReference type="VEuPathDB" id="HostDB:ENSG00000100902"/>
<dbReference type="eggNOG" id="KOG0182">
    <property type="taxonomic scope" value="Eukaryota"/>
</dbReference>
<dbReference type="GeneTree" id="ENSGT00550000074807"/>
<dbReference type="HOGENOM" id="CLU_035750_6_0_1"/>
<dbReference type="InParanoid" id="P60900"/>
<dbReference type="OrthoDB" id="5835702at2759"/>
<dbReference type="PAN-GO" id="P60900">
    <property type="GO annotations" value="4 GO annotations based on evolutionary models"/>
</dbReference>
<dbReference type="PhylomeDB" id="P60900"/>
<dbReference type="TreeFam" id="TF106210"/>
<dbReference type="PathwayCommons" id="P60900"/>
<dbReference type="Reactome" id="R-HSA-1169091">
    <property type="pathway name" value="Activation of NF-kappaB in B cells"/>
</dbReference>
<dbReference type="Reactome" id="R-HSA-1234176">
    <property type="pathway name" value="Oxygen-dependent proline hydroxylation of Hypoxia-inducible Factor Alpha"/>
</dbReference>
<dbReference type="Reactome" id="R-HSA-1236974">
    <property type="pathway name" value="ER-Phagosome pathway"/>
</dbReference>
<dbReference type="Reactome" id="R-HSA-1236978">
    <property type="pathway name" value="Cross-presentation of soluble exogenous antigens (endosomes)"/>
</dbReference>
<dbReference type="Reactome" id="R-HSA-174084">
    <property type="pathway name" value="Autodegradation of Cdh1 by Cdh1:APC/C"/>
</dbReference>
<dbReference type="Reactome" id="R-HSA-174113">
    <property type="pathway name" value="SCF-beta-TrCP mediated degradation of Emi1"/>
</dbReference>
<dbReference type="Reactome" id="R-HSA-174154">
    <property type="pathway name" value="APC/C:Cdc20 mediated degradation of Securin"/>
</dbReference>
<dbReference type="Reactome" id="R-HSA-174178">
    <property type="pathway name" value="APC/C:Cdh1 mediated degradation of Cdc20 and other APC/C:Cdh1 targeted proteins in late mitosis/early G1"/>
</dbReference>
<dbReference type="Reactome" id="R-HSA-174184">
    <property type="pathway name" value="Cdc20:Phospho-APC/C mediated degradation of Cyclin A"/>
</dbReference>
<dbReference type="Reactome" id="R-HSA-180534">
    <property type="pathway name" value="Vpu mediated degradation of CD4"/>
</dbReference>
<dbReference type="Reactome" id="R-HSA-180585">
    <property type="pathway name" value="Vif-mediated degradation of APOBEC3G"/>
</dbReference>
<dbReference type="Reactome" id="R-HSA-187577">
    <property type="pathway name" value="SCF(Skp2)-mediated degradation of p27/p21"/>
</dbReference>
<dbReference type="Reactome" id="R-HSA-195253">
    <property type="pathway name" value="Degradation of beta-catenin by the destruction complex"/>
</dbReference>
<dbReference type="Reactome" id="R-HSA-202424">
    <property type="pathway name" value="Downstream TCR signaling"/>
</dbReference>
<dbReference type="Reactome" id="R-HSA-211733">
    <property type="pathway name" value="Regulation of activated PAK-2p34 by proteasome mediated degradation"/>
</dbReference>
<dbReference type="Reactome" id="R-HSA-2467813">
    <property type="pathway name" value="Separation of Sister Chromatids"/>
</dbReference>
<dbReference type="Reactome" id="R-HSA-2871837">
    <property type="pathway name" value="FCERI mediated NF-kB activation"/>
</dbReference>
<dbReference type="Reactome" id="R-HSA-349425">
    <property type="pathway name" value="Autodegradation of the E3 ubiquitin ligase COP1"/>
</dbReference>
<dbReference type="Reactome" id="R-HSA-350562">
    <property type="pathway name" value="Regulation of ornithine decarboxylase (ODC)"/>
</dbReference>
<dbReference type="Reactome" id="R-HSA-382556">
    <property type="pathway name" value="ABC-family proteins mediated transport"/>
</dbReference>
<dbReference type="Reactome" id="R-HSA-450408">
    <property type="pathway name" value="AUF1 (hnRNP D0) binds and destabilizes mRNA"/>
</dbReference>
<dbReference type="Reactome" id="R-HSA-4608870">
    <property type="pathway name" value="Asymmetric localization of PCP proteins"/>
</dbReference>
<dbReference type="Reactome" id="R-HSA-4641257">
    <property type="pathway name" value="Degradation of AXIN"/>
</dbReference>
<dbReference type="Reactome" id="R-HSA-4641258">
    <property type="pathway name" value="Degradation of DVL"/>
</dbReference>
<dbReference type="Reactome" id="R-HSA-5358346">
    <property type="pathway name" value="Hedgehog ligand biogenesis"/>
</dbReference>
<dbReference type="Reactome" id="R-HSA-5362768">
    <property type="pathway name" value="Hh mutants are degraded by ERAD"/>
</dbReference>
<dbReference type="Reactome" id="R-HSA-5607761">
    <property type="pathway name" value="Dectin-1 mediated noncanonical NF-kB signaling"/>
</dbReference>
<dbReference type="Reactome" id="R-HSA-5607764">
    <property type="pathway name" value="CLEC7A (Dectin-1) signaling"/>
</dbReference>
<dbReference type="Reactome" id="R-HSA-5610780">
    <property type="pathway name" value="Degradation of GLI1 by the proteasome"/>
</dbReference>
<dbReference type="Reactome" id="R-HSA-5610783">
    <property type="pathway name" value="Degradation of GLI2 by the proteasome"/>
</dbReference>
<dbReference type="Reactome" id="R-HSA-5610785">
    <property type="pathway name" value="GLI3 is processed to GLI3R by the proteasome"/>
</dbReference>
<dbReference type="Reactome" id="R-HSA-5632684">
    <property type="pathway name" value="Hedgehog 'on' state"/>
</dbReference>
<dbReference type="Reactome" id="R-HSA-5658442">
    <property type="pathway name" value="Regulation of RAS by GAPs"/>
</dbReference>
<dbReference type="Reactome" id="R-HSA-5668541">
    <property type="pathway name" value="TNFR2 non-canonical NF-kB pathway"/>
</dbReference>
<dbReference type="Reactome" id="R-HSA-5676590">
    <property type="pathway name" value="NIK--&gt;noncanonical NF-kB signaling"/>
</dbReference>
<dbReference type="Reactome" id="R-HSA-5678895">
    <property type="pathway name" value="Defective CFTR causes cystic fibrosis"/>
</dbReference>
<dbReference type="Reactome" id="R-HSA-5687128">
    <property type="pathway name" value="MAPK6/MAPK4 signaling"/>
</dbReference>
<dbReference type="Reactome" id="R-HSA-5689603">
    <property type="pathway name" value="UCH proteinases"/>
</dbReference>
<dbReference type="Reactome" id="R-HSA-5689880">
    <property type="pathway name" value="Ub-specific processing proteases"/>
</dbReference>
<dbReference type="Reactome" id="R-HSA-68867">
    <property type="pathway name" value="Assembly of the pre-replicative complex"/>
</dbReference>
<dbReference type="Reactome" id="R-HSA-68949">
    <property type="pathway name" value="Orc1 removal from chromatin"/>
</dbReference>
<dbReference type="Reactome" id="R-HSA-69017">
    <property type="pathway name" value="CDK-mediated phosphorylation and removal of Cdc6"/>
</dbReference>
<dbReference type="Reactome" id="R-HSA-69481">
    <property type="pathway name" value="G2/M Checkpoints"/>
</dbReference>
<dbReference type="Reactome" id="R-HSA-69601">
    <property type="pathway name" value="Ubiquitin Mediated Degradation of Phosphorylated Cdc25A"/>
</dbReference>
<dbReference type="Reactome" id="R-HSA-75815">
    <property type="pathway name" value="Ubiquitin-dependent degradation of Cyclin D"/>
</dbReference>
<dbReference type="Reactome" id="R-HSA-8852276">
    <property type="pathway name" value="The role of GTSE1 in G2/M progression after G2 checkpoint"/>
</dbReference>
<dbReference type="Reactome" id="R-HSA-8854050">
    <property type="pathway name" value="FBXL7 down-regulates AURKA during mitotic entry and in early mitosis"/>
</dbReference>
<dbReference type="Reactome" id="R-HSA-8939236">
    <property type="pathway name" value="RUNX1 regulates transcription of genes involved in differentiation of HSCs"/>
</dbReference>
<dbReference type="Reactome" id="R-HSA-8939902">
    <property type="pathway name" value="Regulation of RUNX2 expression and activity"/>
</dbReference>
<dbReference type="Reactome" id="R-HSA-8941858">
    <property type="pathway name" value="Regulation of RUNX3 expression and activity"/>
</dbReference>
<dbReference type="Reactome" id="R-HSA-8948751">
    <property type="pathway name" value="Regulation of PTEN stability and activity"/>
</dbReference>
<dbReference type="Reactome" id="R-HSA-8951664">
    <property type="pathway name" value="Neddylation"/>
</dbReference>
<dbReference type="Reactome" id="R-HSA-9010553">
    <property type="pathway name" value="Regulation of expression of SLITs and ROBOs"/>
</dbReference>
<dbReference type="Reactome" id="R-HSA-9020702">
    <property type="pathway name" value="Interleukin-1 signaling"/>
</dbReference>
<dbReference type="Reactome" id="R-HSA-9604323">
    <property type="pathway name" value="Negative regulation of NOTCH4 signaling"/>
</dbReference>
<dbReference type="Reactome" id="R-HSA-9755511">
    <property type="pathway name" value="KEAP1-NFE2L2 pathway"/>
</dbReference>
<dbReference type="Reactome" id="R-HSA-9762114">
    <property type="pathway name" value="GSK3B and BTRC:CUL1-mediated-degradation of NFE2L2"/>
</dbReference>
<dbReference type="Reactome" id="R-HSA-9824272">
    <property type="pathway name" value="Somitogenesis"/>
</dbReference>
<dbReference type="Reactome" id="R-HSA-983168">
    <property type="pathway name" value="Antigen processing: Ubiquitination &amp; Proteasome degradation"/>
</dbReference>
<dbReference type="Reactome" id="R-HSA-9907900">
    <property type="pathway name" value="Proteasome assembly"/>
</dbReference>
<dbReference type="SignaLink" id="P60900"/>
<dbReference type="SIGNOR" id="P60900"/>
<dbReference type="BioGRID-ORCS" id="5687">
    <property type="hits" value="829 hits in 1134 CRISPR screens"/>
</dbReference>
<dbReference type="ChiTaRS" id="PSMA6">
    <property type="organism name" value="human"/>
</dbReference>
<dbReference type="EvolutionaryTrace" id="P60900"/>
<dbReference type="GeneWiki" id="PSMA6"/>
<dbReference type="GenomeRNAi" id="5687"/>
<dbReference type="Pharos" id="P60900">
    <property type="development level" value="Tbio"/>
</dbReference>
<dbReference type="PRO" id="PR:P60900"/>
<dbReference type="Proteomes" id="UP000005640">
    <property type="component" value="Chromosome 14"/>
</dbReference>
<dbReference type="RNAct" id="P60900">
    <property type="molecule type" value="protein"/>
</dbReference>
<dbReference type="Bgee" id="ENSG00000100902">
    <property type="expression patterns" value="Expressed in left testis and 103 other cell types or tissues"/>
</dbReference>
<dbReference type="ExpressionAtlas" id="P60900">
    <property type="expression patterns" value="baseline and differential"/>
</dbReference>
<dbReference type="GO" id="GO:0005929">
    <property type="term" value="C:cilium"/>
    <property type="evidence" value="ECO:0000314"/>
    <property type="project" value="HPA"/>
</dbReference>
<dbReference type="GO" id="GO:0005737">
    <property type="term" value="C:cytoplasm"/>
    <property type="evidence" value="ECO:0000314"/>
    <property type="project" value="UniProtKB"/>
</dbReference>
<dbReference type="GO" id="GO:0005829">
    <property type="term" value="C:cytosol"/>
    <property type="evidence" value="ECO:0000314"/>
    <property type="project" value="HPA"/>
</dbReference>
<dbReference type="GO" id="GO:0070062">
    <property type="term" value="C:extracellular exosome"/>
    <property type="evidence" value="ECO:0007005"/>
    <property type="project" value="UniProtKB"/>
</dbReference>
<dbReference type="GO" id="GO:0005739">
    <property type="term" value="C:mitochondrion"/>
    <property type="evidence" value="ECO:0000314"/>
    <property type="project" value="HPA"/>
</dbReference>
<dbReference type="GO" id="GO:0030016">
    <property type="term" value="C:myofibril"/>
    <property type="evidence" value="ECO:0000250"/>
    <property type="project" value="BHF-UCL"/>
</dbReference>
<dbReference type="GO" id="GO:0016363">
    <property type="term" value="C:nuclear matrix"/>
    <property type="evidence" value="ECO:0000250"/>
    <property type="project" value="BHF-UCL"/>
</dbReference>
<dbReference type="GO" id="GO:0005654">
    <property type="term" value="C:nucleoplasm"/>
    <property type="evidence" value="ECO:0000314"/>
    <property type="project" value="HPA"/>
</dbReference>
<dbReference type="GO" id="GO:0005634">
    <property type="term" value="C:nucleus"/>
    <property type="evidence" value="ECO:0000314"/>
    <property type="project" value="UniProtKB"/>
</dbReference>
<dbReference type="GO" id="GO:0000932">
    <property type="term" value="C:P-body"/>
    <property type="evidence" value="ECO:0000250"/>
    <property type="project" value="UniProtKB"/>
</dbReference>
<dbReference type="GO" id="GO:0000502">
    <property type="term" value="C:proteasome complex"/>
    <property type="evidence" value="ECO:0000314"/>
    <property type="project" value="UniProtKB"/>
</dbReference>
<dbReference type="GO" id="GO:0005839">
    <property type="term" value="C:proteasome core complex"/>
    <property type="evidence" value="ECO:0000314"/>
    <property type="project" value="UniProtKB"/>
</dbReference>
<dbReference type="GO" id="GO:0019773">
    <property type="term" value="C:proteasome core complex, alpha-subunit complex"/>
    <property type="evidence" value="ECO:0000314"/>
    <property type="project" value="UniProtKB"/>
</dbReference>
<dbReference type="GO" id="GO:0005840">
    <property type="term" value="C:ribosome"/>
    <property type="evidence" value="ECO:0000314"/>
    <property type="project" value="BHF-UCL"/>
</dbReference>
<dbReference type="GO" id="GO:0030017">
    <property type="term" value="C:sarcomere"/>
    <property type="evidence" value="ECO:0000250"/>
    <property type="project" value="BHF-UCL"/>
</dbReference>
<dbReference type="GO" id="GO:0004175">
    <property type="term" value="F:endopeptidase activity"/>
    <property type="evidence" value="ECO:0000303"/>
    <property type="project" value="UniProtKB"/>
</dbReference>
<dbReference type="GO" id="GO:0051059">
    <property type="term" value="F:NF-kappaB binding"/>
    <property type="evidence" value="ECO:0000353"/>
    <property type="project" value="BHF-UCL"/>
</dbReference>
<dbReference type="GO" id="GO:0035639">
    <property type="term" value="F:purine ribonucleoside triphosphate binding"/>
    <property type="evidence" value="ECO:0000303"/>
    <property type="project" value="BHF-UCL"/>
</dbReference>
<dbReference type="GO" id="GO:0003723">
    <property type="term" value="F:RNA binding"/>
    <property type="evidence" value="ECO:0000314"/>
    <property type="project" value="BHF-UCL"/>
</dbReference>
<dbReference type="GO" id="GO:0043123">
    <property type="term" value="P:positive regulation of canonical NF-kappaB signal transduction"/>
    <property type="evidence" value="ECO:0000315"/>
    <property type="project" value="BHF-UCL"/>
</dbReference>
<dbReference type="GO" id="GO:0043161">
    <property type="term" value="P:proteasome-mediated ubiquitin-dependent protein catabolic process"/>
    <property type="evidence" value="ECO:0000318"/>
    <property type="project" value="GO_Central"/>
</dbReference>
<dbReference type="GO" id="GO:0051603">
    <property type="term" value="P:proteolysis involved in protein catabolic process"/>
    <property type="evidence" value="ECO:0000315"/>
    <property type="project" value="BHF-UCL"/>
</dbReference>
<dbReference type="GO" id="GO:0050727">
    <property type="term" value="P:regulation of inflammatory response"/>
    <property type="evidence" value="ECO:0000315"/>
    <property type="project" value="BHF-UCL"/>
</dbReference>
<dbReference type="CDD" id="cd03754">
    <property type="entry name" value="proteasome_alpha_type_6"/>
    <property type="match status" value="1"/>
</dbReference>
<dbReference type="FunFam" id="3.60.20.10:FF:000020">
    <property type="entry name" value="Proteasome subunit alpha type"/>
    <property type="match status" value="1"/>
</dbReference>
<dbReference type="Gene3D" id="3.60.20.10">
    <property type="entry name" value="Glutamine Phosphoribosylpyrophosphate, subunit 1, domain 1"/>
    <property type="match status" value="1"/>
</dbReference>
<dbReference type="InterPro" id="IPR029055">
    <property type="entry name" value="Ntn_hydrolases_N"/>
</dbReference>
<dbReference type="InterPro" id="IPR050115">
    <property type="entry name" value="Proteasome_alpha"/>
</dbReference>
<dbReference type="InterPro" id="IPR023332">
    <property type="entry name" value="Proteasome_alpha-type"/>
</dbReference>
<dbReference type="InterPro" id="IPR000426">
    <property type="entry name" value="Proteasome_asu_N"/>
</dbReference>
<dbReference type="InterPro" id="IPR001353">
    <property type="entry name" value="Proteasome_sua/b"/>
</dbReference>
<dbReference type="InterPro" id="IPR034642">
    <property type="entry name" value="Proteasome_subunit_alpha6"/>
</dbReference>
<dbReference type="NCBIfam" id="NF003075">
    <property type="entry name" value="PRK03996.1"/>
    <property type="match status" value="1"/>
</dbReference>
<dbReference type="PANTHER" id="PTHR11599">
    <property type="entry name" value="PROTEASOME SUBUNIT ALPHA/BETA"/>
    <property type="match status" value="1"/>
</dbReference>
<dbReference type="Pfam" id="PF00227">
    <property type="entry name" value="Proteasome"/>
    <property type="match status" value="1"/>
</dbReference>
<dbReference type="Pfam" id="PF10584">
    <property type="entry name" value="Proteasome_A_N"/>
    <property type="match status" value="1"/>
</dbReference>
<dbReference type="SMART" id="SM00948">
    <property type="entry name" value="Proteasome_A_N"/>
    <property type="match status" value="1"/>
</dbReference>
<dbReference type="SUPFAM" id="SSF56235">
    <property type="entry name" value="N-terminal nucleophile aminohydrolases (Ntn hydrolases)"/>
    <property type="match status" value="1"/>
</dbReference>
<dbReference type="PROSITE" id="PS00388">
    <property type="entry name" value="PROTEASOME_ALPHA_1"/>
    <property type="match status" value="1"/>
</dbReference>
<dbReference type="PROSITE" id="PS51475">
    <property type="entry name" value="PROTEASOME_ALPHA_2"/>
    <property type="match status" value="1"/>
</dbReference>
<sequence>MSRGSSAGFDRHITIFSPEGRLYQVEYAFKAINQGGLTSVAVRGKDCAVIVTQKKVPDKLLDSSTVTHLFKITENIGCVMTGMTADSRSQVQRARYEAANWKYKYGYEIPVDMLCKRIADISQVYTQNAEMRPLGCCMILIGIDEEQGPQVYKCDPAGYYCGFKATAAGVKQTESTSFLEKKVKKKFDWTFEQTVETAITCLSTVLSIDFKPSEIEVGVVTVENPKFRILTEAEIDAHLVALAERD</sequence>
<protein>
    <recommendedName>
        <fullName evidence="17">Proteasome subunit alpha type-6</fullName>
    </recommendedName>
    <alternativeName>
        <fullName>27 kDa prosomal protein</fullName>
        <shortName>PROS-27</shortName>
        <shortName>p27K</shortName>
    </alternativeName>
    <alternativeName>
        <fullName>Macropain iota chain</fullName>
    </alternativeName>
    <alternativeName>
        <fullName>Multicatalytic endopeptidase complex iota chain</fullName>
    </alternativeName>
    <alternativeName>
        <fullName>Proteasome iota chain</fullName>
    </alternativeName>
    <alternativeName>
        <fullName evidence="16">Proteasome subunit alpha-1</fullName>
        <shortName evidence="16">alpha-1</shortName>
    </alternativeName>
</protein>
<accession>P60900</accession>
<accession>B2R7J9</accession>
<accession>B4DQR4</accession>
<accession>B4DXJ9</accession>
<accession>P34062</accession>
<accession>Q6IB60</accession>
<gene>
    <name evidence="18" type="primary">PSMA6</name>
    <name type="synonym">PROS27</name>
</gene>